<dbReference type="EMBL" id="K02403">
    <property type="protein sequence ID" value="AAB59537.1"/>
    <property type="status" value="ALT_SEQ"/>
    <property type="molecule type" value="mRNA"/>
</dbReference>
<dbReference type="EMBL" id="M59815">
    <property type="protein sequence ID" value="AAA51855.1"/>
    <property type="molecule type" value="Genomic_DNA"/>
</dbReference>
<dbReference type="EMBL" id="M59816">
    <property type="protein sequence ID" value="AAA51855.1"/>
    <property type="status" value="JOINED"/>
    <property type="molecule type" value="Genomic_DNA"/>
</dbReference>
<dbReference type="EMBL" id="L26261">
    <property type="protein sequence ID" value="AAA20121.2"/>
    <property type="molecule type" value="Genomic_DNA"/>
</dbReference>
<dbReference type="EMBL" id="AB209989">
    <property type="protein sequence ID" value="BAE06071.1"/>
    <property type="status" value="ALT_INIT"/>
    <property type="molecule type" value="mRNA"/>
</dbReference>
<dbReference type="EMBL" id="AL645922">
    <property type="status" value="NOT_ANNOTATED_CDS"/>
    <property type="molecule type" value="Genomic_DNA"/>
</dbReference>
<dbReference type="EMBL" id="AL844853">
    <property type="status" value="NOT_ANNOTATED_CDS"/>
    <property type="molecule type" value="Genomic_DNA"/>
</dbReference>
<dbReference type="EMBL" id="AL929593">
    <property type="status" value="NOT_ANNOTATED_CDS"/>
    <property type="molecule type" value="Genomic_DNA"/>
</dbReference>
<dbReference type="EMBL" id="CR936924">
    <property type="status" value="NOT_ANNOTATED_CDS"/>
    <property type="molecule type" value="Genomic_DNA"/>
</dbReference>
<dbReference type="EMBL" id="BC012372">
    <property type="protein sequence ID" value="AAH12372.2"/>
    <property type="molecule type" value="mRNA"/>
</dbReference>
<dbReference type="EMBL" id="BC063289">
    <property type="protein sequence ID" value="AAH63289.1"/>
    <property type="molecule type" value="mRNA"/>
</dbReference>
<dbReference type="EMBL" id="BC144546">
    <property type="protein sequence ID" value="AAI44547.1"/>
    <property type="molecule type" value="mRNA"/>
</dbReference>
<dbReference type="EMBL" id="BC146673">
    <property type="protein sequence ID" value="AAI46674.1"/>
    <property type="molecule type" value="mRNA"/>
</dbReference>
<dbReference type="EMBL" id="BC146849">
    <property type="protein sequence ID" value="AAI46850.1"/>
    <property type="molecule type" value="mRNA"/>
</dbReference>
<dbReference type="EMBL" id="BC151204">
    <property type="protein sequence ID" value="AAI51205.1"/>
    <property type="molecule type" value="mRNA"/>
</dbReference>
<dbReference type="EMBL" id="BC171786">
    <property type="protein sequence ID" value="AAI71786.1"/>
    <property type="molecule type" value="mRNA"/>
</dbReference>
<dbReference type="EMBL" id="M14824">
    <property type="protein sequence ID" value="AAA52292.1"/>
    <property type="molecule type" value="Genomic_DNA"/>
</dbReference>
<dbReference type="EMBL" id="X77491">
    <property type="protein sequence ID" value="CAA54627.1"/>
    <property type="molecule type" value="Genomic_DNA"/>
</dbReference>
<dbReference type="EMBL" id="AY379925">
    <property type="protein sequence ID" value="AAR89152.1"/>
    <property type="molecule type" value="Genomic_DNA"/>
</dbReference>
<dbReference type="EMBL" id="AY379926">
    <property type="protein sequence ID" value="AAR89153.1"/>
    <property type="molecule type" value="Genomic_DNA"/>
</dbReference>
<dbReference type="EMBL" id="AY379927">
    <property type="protein sequence ID" value="AAR89154.1"/>
    <property type="molecule type" value="Genomic_DNA"/>
</dbReference>
<dbReference type="EMBL" id="AY379928">
    <property type="protein sequence ID" value="AAR89155.1"/>
    <property type="molecule type" value="Genomic_DNA"/>
</dbReference>
<dbReference type="EMBL" id="AY379929">
    <property type="protein sequence ID" value="AAR89156.1"/>
    <property type="molecule type" value="Genomic_DNA"/>
</dbReference>
<dbReference type="EMBL" id="AY379930">
    <property type="protein sequence ID" value="AAR89157.1"/>
    <property type="molecule type" value="Genomic_DNA"/>
</dbReference>
<dbReference type="EMBL" id="AY379931">
    <property type="protein sequence ID" value="AAR89158.1"/>
    <property type="molecule type" value="Genomic_DNA"/>
</dbReference>
<dbReference type="EMBL" id="AY379932">
    <property type="protein sequence ID" value="AAR89159.1"/>
    <property type="molecule type" value="Genomic_DNA"/>
</dbReference>
<dbReference type="EMBL" id="AY379933">
    <property type="protein sequence ID" value="AAR89160.1"/>
    <property type="molecule type" value="Genomic_DNA"/>
</dbReference>
<dbReference type="EMBL" id="AY379934">
    <property type="protein sequence ID" value="AAR89161.1"/>
    <property type="molecule type" value="Genomic_DNA"/>
</dbReference>
<dbReference type="EMBL" id="AY379935">
    <property type="protein sequence ID" value="AAR89162.1"/>
    <property type="molecule type" value="Genomic_DNA"/>
</dbReference>
<dbReference type="EMBL" id="AY379960">
    <property type="protein sequence ID" value="AAR89164.1"/>
    <property type="molecule type" value="Genomic_DNA"/>
</dbReference>
<dbReference type="EMBL" id="AY379962">
    <property type="protein sequence ID" value="AAR89166.1"/>
    <property type="molecule type" value="Genomic_DNA"/>
</dbReference>
<dbReference type="EMBL" id="AY379963">
    <property type="protein sequence ID" value="AAR89167.1"/>
    <property type="molecule type" value="Genomic_DNA"/>
</dbReference>
<dbReference type="EMBL" id="AY379964">
    <property type="protein sequence ID" value="AAR89168.1"/>
    <property type="molecule type" value="Genomic_DNA"/>
</dbReference>
<dbReference type="EMBL" id="AY379965">
    <property type="protein sequence ID" value="AAR89169.1"/>
    <property type="molecule type" value="Genomic_DNA"/>
</dbReference>
<dbReference type="EMBL" id="AY379966">
    <property type="protein sequence ID" value="AAR89170.1"/>
    <property type="molecule type" value="Genomic_DNA"/>
</dbReference>
<dbReference type="EMBL" id="U77886">
    <property type="protein sequence ID" value="AAK49810.1"/>
    <property type="molecule type" value="Genomic_DNA"/>
</dbReference>
<dbReference type="EMBL" id="V00502">
    <property type="protein sequence ID" value="CAA23760.1"/>
    <property type="molecule type" value="mRNA"/>
</dbReference>
<dbReference type="EMBL" id="K00830">
    <property type="protein sequence ID" value="AAA36229.1"/>
    <property type="molecule type" value="mRNA"/>
</dbReference>
<dbReference type="CCDS" id="CCDS47404.1">
    <molecule id="P0C0L4-1"/>
</dbReference>
<dbReference type="CCDS" id="CCDS59005.1">
    <molecule id="P0C0L4-2"/>
</dbReference>
<dbReference type="PIR" id="B20807">
    <property type="entry name" value="B20807"/>
</dbReference>
<dbReference type="PIR" id="I56095">
    <property type="entry name" value="C4HU"/>
</dbReference>
<dbReference type="RefSeq" id="NP_001239133.1">
    <molecule id="P0C0L4-2"/>
    <property type="nucleotide sequence ID" value="NM_001252204.2"/>
</dbReference>
<dbReference type="RefSeq" id="NP_009224.2">
    <molecule id="P0C0L4-1"/>
    <property type="nucleotide sequence ID" value="NM_007293.3"/>
</dbReference>
<dbReference type="PDB" id="1HZF">
    <property type="method" value="X-ray"/>
    <property type="resolution" value="2.30 A"/>
    <property type="chains" value="A=957-1323"/>
</dbReference>
<dbReference type="PDB" id="5JPM">
    <property type="method" value="X-ray"/>
    <property type="resolution" value="3.75 A"/>
    <property type="chains" value="A/D=20-675, B/E=680-1446, C/F=1454-1744"/>
</dbReference>
<dbReference type="PDB" id="5JPN">
    <property type="method" value="X-ray"/>
    <property type="resolution" value="3.60 A"/>
    <property type="chains" value="A=20-675, B=680-1446, C=1455-1744"/>
</dbReference>
<dbReference type="PDB" id="5JTW">
    <property type="method" value="X-ray"/>
    <property type="resolution" value="3.50 A"/>
    <property type="chains" value="A/D=20-675, B/E=757-1446, C/F=1454-1744"/>
</dbReference>
<dbReference type="PDB" id="6YSQ">
    <property type="method" value="X-ray"/>
    <property type="resolution" value="3.30 A"/>
    <property type="chains" value="C/D=757-1446"/>
</dbReference>
<dbReference type="PDB" id="7B2M">
    <property type="method" value="EM"/>
    <property type="resolution" value="3.39 A"/>
    <property type="chains" value="A=20-675, B=680-1446, C=1454-1744"/>
</dbReference>
<dbReference type="PDB" id="7B2P">
    <property type="method" value="EM"/>
    <property type="resolution" value="3.43 A"/>
    <property type="chains" value="A=20-675, B=680-1446, C=1454-1744"/>
</dbReference>
<dbReference type="PDB" id="7B2Q">
    <property type="method" value="EM"/>
    <property type="resolution" value="3.76 A"/>
    <property type="chains" value="A=20-675, B=680-1446, C=1454-1744"/>
</dbReference>
<dbReference type="PDBsum" id="1HZF"/>
<dbReference type="PDBsum" id="5JPM"/>
<dbReference type="PDBsum" id="5JPN"/>
<dbReference type="PDBsum" id="5JTW"/>
<dbReference type="PDBsum" id="6YSQ"/>
<dbReference type="PDBsum" id="7B2M"/>
<dbReference type="PDBsum" id="7B2P"/>
<dbReference type="PDBsum" id="7B2Q"/>
<dbReference type="EMDB" id="EMD-11988"/>
<dbReference type="EMDB" id="EMD-11989"/>
<dbReference type="EMDB" id="EMD-11990"/>
<dbReference type="EMDB" id="EMD-11991"/>
<dbReference type="SMR" id="P0C0L4"/>
<dbReference type="BioGRID" id="107181">
    <property type="interactions" value="84"/>
</dbReference>
<dbReference type="BioGRID" id="107182">
    <property type="interactions" value="15"/>
</dbReference>
<dbReference type="ComplexPortal" id="CPX-5675">
    <property type="entry name" value="Classical and lectin pathway C3 convertase complex C4b2a-A"/>
</dbReference>
<dbReference type="FunCoup" id="P0C0L4">
    <property type="interactions" value="557"/>
</dbReference>
<dbReference type="IntAct" id="P0C0L4">
    <property type="interactions" value="72"/>
</dbReference>
<dbReference type="STRING" id="9606.ENSP00000396688"/>
<dbReference type="DrugBank" id="DB00028">
    <property type="generic name" value="Human immunoglobulin G"/>
</dbReference>
<dbReference type="MEROPS" id="I39.951"/>
<dbReference type="CarbonylDB" id="P0C0L4"/>
<dbReference type="GlyConnect" id="651">
    <property type="glycosylation" value="32 N-Linked glycans (4 sites), 4 O-Linked glycans (2 sites)"/>
</dbReference>
<dbReference type="GlyCosmos" id="P0C0L4">
    <property type="glycosylation" value="8 sites, 44 glycans"/>
</dbReference>
<dbReference type="GlyGen" id="P0C0L4">
    <property type="glycosylation" value="13 sites, 40 N-linked glycans (4 sites), 6 O-linked glycans (6 sites)"/>
</dbReference>
<dbReference type="iPTMnet" id="P0C0L4"/>
<dbReference type="PhosphoSitePlus" id="P0C0L4"/>
<dbReference type="BioMuta" id="C4A"/>
<dbReference type="DMDM" id="476007827"/>
<dbReference type="CPTAC" id="CPTAC-665"/>
<dbReference type="CPTAC" id="CPTAC-666"/>
<dbReference type="jPOST" id="P0C0L4"/>
<dbReference type="MassIVE" id="P0C0L4"/>
<dbReference type="PaxDb" id="9606-ENSP00000396688"/>
<dbReference type="PeptideAtlas" id="P0C0L4"/>
<dbReference type="PRIDE" id="P0C0L4"/>
<dbReference type="ProteomicsDB" id="2869"/>
<dbReference type="ProteomicsDB" id="52292">
    <molecule id="P0C0L4-1"/>
</dbReference>
<dbReference type="ProteomicsDB" id="62992"/>
<dbReference type="ProteomicsDB" id="774"/>
<dbReference type="Pumba" id="P0C0L4"/>
<dbReference type="Antibodypedia" id="34827">
    <property type="antibodies" value="704 antibodies from 37 providers"/>
</dbReference>
<dbReference type="DNASU" id="721"/>
<dbReference type="Ensembl" id="ENST00000383325.8">
    <property type="protein sequence ID" value="ENSP00000372815.4"/>
    <property type="gene ID" value="ENSG00000206340.10"/>
</dbReference>
<dbReference type="Ensembl" id="ENST00000421274.7">
    <property type="protein sequence ID" value="ENSP00000388662.2"/>
    <property type="gene ID" value="ENSG00000227746.10"/>
</dbReference>
<dbReference type="Ensembl" id="ENST00000428956.7">
    <molecule id="P0C0L4-1"/>
    <property type="protein sequence ID" value="ENSP00000396688.2"/>
    <property type="gene ID" value="ENSG00000244731.10"/>
</dbReference>
<dbReference type="Ensembl" id="ENST00000498271.1">
    <molecule id="P0C0L4-2"/>
    <property type="protein sequence ID" value="ENSP00000420212.1"/>
    <property type="gene ID" value="ENSG00000244731.10"/>
</dbReference>
<dbReference type="GeneID" id="720"/>
<dbReference type="GeneID" id="721"/>
<dbReference type="KEGG" id="hsa:720"/>
<dbReference type="KEGG" id="hsa:721"/>
<dbReference type="MANE-Select" id="ENST00000428956.7">
    <property type="protein sequence ID" value="ENSP00000396688.2"/>
    <property type="RefSeq nucleotide sequence ID" value="NM_007293.3"/>
    <property type="RefSeq protein sequence ID" value="NP_009224.2"/>
</dbReference>
<dbReference type="UCSC" id="uc011doy.3">
    <molecule id="P0C0L4-1"/>
    <property type="organism name" value="human"/>
</dbReference>
<dbReference type="AGR" id="HGNC:1323"/>
<dbReference type="AGR" id="HGNC:1324"/>
<dbReference type="CTD" id="720"/>
<dbReference type="CTD" id="721"/>
<dbReference type="DisGeNET" id="720"/>
<dbReference type="DisGeNET" id="721"/>
<dbReference type="GeneCards" id="C4A"/>
<dbReference type="HGNC" id="HGNC:1323">
    <property type="gene designation" value="C4A"/>
</dbReference>
<dbReference type="HPA" id="ENSG00000244731">
    <property type="expression patterns" value="Tissue enhanced (adrenal gland, liver)"/>
</dbReference>
<dbReference type="MalaCards" id="C4A"/>
<dbReference type="MIM" id="120790">
    <property type="type" value="phenotype"/>
</dbReference>
<dbReference type="MIM" id="120810">
    <property type="type" value="gene"/>
</dbReference>
<dbReference type="MIM" id="152700">
    <property type="type" value="phenotype"/>
</dbReference>
<dbReference type="MIM" id="614374">
    <property type="type" value="phenotype"/>
</dbReference>
<dbReference type="MIM" id="614380">
    <property type="type" value="phenotype"/>
</dbReference>
<dbReference type="neXtProt" id="NX_P0C0L4"/>
<dbReference type="OpenTargets" id="ENSG00000244731"/>
<dbReference type="Orphanet" id="300345">
    <property type="disease" value="Autosomal systemic lupus erythematosus"/>
</dbReference>
<dbReference type="Orphanet" id="117">
    <property type="disease" value="Behcet disease"/>
</dbReference>
<dbReference type="Orphanet" id="169147">
    <property type="disease" value="Immunodeficiency due to a classical component pathway complement deficiency"/>
</dbReference>
<dbReference type="Orphanet" id="536">
    <property type="disease" value="Systemic lupus erythematosus"/>
</dbReference>
<dbReference type="PharmGKB" id="PA25903"/>
<dbReference type="PharmGKB" id="PA25904"/>
<dbReference type="VEuPathDB" id="HostDB:ENSG00000244731"/>
<dbReference type="eggNOG" id="KOG1366">
    <property type="taxonomic scope" value="Eukaryota"/>
</dbReference>
<dbReference type="GeneTree" id="ENSGT00940000155739"/>
<dbReference type="HOGENOM" id="CLU_001634_4_1_1"/>
<dbReference type="InParanoid" id="P0C0L4"/>
<dbReference type="OMA" id="EPSGCFE"/>
<dbReference type="OrthoDB" id="6359008at2759"/>
<dbReference type="PAN-GO" id="P0C0L4">
    <property type="GO annotations" value="2 GO annotations based on evolutionary models"/>
</dbReference>
<dbReference type="PhylomeDB" id="P0C0L4"/>
<dbReference type="TreeFam" id="TF313285"/>
<dbReference type="PathwayCommons" id="P0C0L4"/>
<dbReference type="Reactome" id="R-HSA-166663">
    <property type="pathway name" value="Initial triggering of complement"/>
</dbReference>
<dbReference type="Reactome" id="R-HSA-174577">
    <property type="pathway name" value="Activation of C3 and C5"/>
</dbReference>
<dbReference type="Reactome" id="R-HSA-381426">
    <property type="pathway name" value="Regulation of Insulin-like Growth Factor (IGF) transport and uptake by Insulin-like Growth Factor Binding Proteins (IGFBPs)"/>
</dbReference>
<dbReference type="Reactome" id="R-HSA-8957275">
    <property type="pathway name" value="Post-translational protein phosphorylation"/>
</dbReference>
<dbReference type="Reactome" id="R-HSA-977606">
    <property type="pathway name" value="Regulation of Complement cascade"/>
</dbReference>
<dbReference type="SABIO-RK" id="P0C0L4"/>
<dbReference type="SignaLink" id="P0C0L4"/>
<dbReference type="SIGNOR" id="P0C0L4"/>
<dbReference type="BioGRID-ORCS" id="720">
    <property type="hits" value="31 hits in 1122 CRISPR screens"/>
</dbReference>
<dbReference type="BioGRID-ORCS" id="721">
    <property type="hits" value="9 hits in 741 CRISPR screens"/>
</dbReference>
<dbReference type="ChiTaRS" id="C4A">
    <property type="organism name" value="human"/>
</dbReference>
<dbReference type="EvolutionaryTrace" id="P0C0L4"/>
<dbReference type="GeneWiki" id="C4A"/>
<dbReference type="Pharos" id="P0C0L4">
    <property type="development level" value="Tbio"/>
</dbReference>
<dbReference type="PRO" id="PR:P0C0L4"/>
<dbReference type="Proteomes" id="UP000005640">
    <property type="component" value="Chromosome 6"/>
</dbReference>
<dbReference type="RNAct" id="P0C0L4">
    <property type="molecule type" value="protein"/>
</dbReference>
<dbReference type="Bgee" id="ENSG00000244731">
    <property type="expression patterns" value="Expressed in right lobe of liver and 94 other cell types or tissues"/>
</dbReference>
<dbReference type="GO" id="GO:0030424">
    <property type="term" value="C:axon"/>
    <property type="evidence" value="ECO:0000314"/>
    <property type="project" value="UniProtKB"/>
</dbReference>
<dbReference type="GO" id="GO:0072562">
    <property type="term" value="C:blood microparticle"/>
    <property type="evidence" value="ECO:0007005"/>
    <property type="project" value="UniProtKB"/>
</dbReference>
<dbReference type="GO" id="GO:0030425">
    <property type="term" value="C:dendrite"/>
    <property type="evidence" value="ECO:0000314"/>
    <property type="project" value="UniProtKB"/>
</dbReference>
<dbReference type="GO" id="GO:0005788">
    <property type="term" value="C:endoplasmic reticulum lumen"/>
    <property type="evidence" value="ECO:0000304"/>
    <property type="project" value="Reactome"/>
</dbReference>
<dbReference type="GO" id="GO:0070062">
    <property type="term" value="C:extracellular exosome"/>
    <property type="evidence" value="ECO:0007005"/>
    <property type="project" value="UniProtKB"/>
</dbReference>
<dbReference type="GO" id="GO:0005576">
    <property type="term" value="C:extracellular region"/>
    <property type="evidence" value="ECO:0000304"/>
    <property type="project" value="Reactome"/>
</dbReference>
<dbReference type="GO" id="GO:0005615">
    <property type="term" value="C:extracellular space"/>
    <property type="evidence" value="ECO:0000314"/>
    <property type="project" value="UniProtKB"/>
</dbReference>
<dbReference type="GO" id="GO:0043025">
    <property type="term" value="C:neuronal cell body"/>
    <property type="evidence" value="ECO:0000314"/>
    <property type="project" value="UniProtKB"/>
</dbReference>
<dbReference type="GO" id="GO:0005886">
    <property type="term" value="C:plasma membrane"/>
    <property type="evidence" value="ECO:0000304"/>
    <property type="project" value="Reactome"/>
</dbReference>
<dbReference type="GO" id="GO:0045202">
    <property type="term" value="C:synapse"/>
    <property type="evidence" value="ECO:0000314"/>
    <property type="project" value="UniProtKB"/>
</dbReference>
<dbReference type="GO" id="GO:0001849">
    <property type="term" value="F:complement component C1q complex binding"/>
    <property type="evidence" value="ECO:0000314"/>
    <property type="project" value="BHF-UCL"/>
</dbReference>
<dbReference type="GO" id="GO:0004866">
    <property type="term" value="F:endopeptidase inhibitor activity"/>
    <property type="evidence" value="ECO:0007669"/>
    <property type="project" value="InterPro"/>
</dbReference>
<dbReference type="GO" id="GO:0006956">
    <property type="term" value="P:complement activation"/>
    <property type="evidence" value="ECO:0000316"/>
    <property type="project" value="BHF-UCL"/>
</dbReference>
<dbReference type="GO" id="GO:0006958">
    <property type="term" value="P:complement activation, classical pathway"/>
    <property type="evidence" value="ECO:0007669"/>
    <property type="project" value="UniProtKB-KW"/>
</dbReference>
<dbReference type="GO" id="GO:0006954">
    <property type="term" value="P:inflammatory response"/>
    <property type="evidence" value="ECO:0007669"/>
    <property type="project" value="UniProtKB-KW"/>
</dbReference>
<dbReference type="GO" id="GO:0045087">
    <property type="term" value="P:innate immune response"/>
    <property type="evidence" value="ECO:0007669"/>
    <property type="project" value="UniProtKB-KW"/>
</dbReference>
<dbReference type="GO" id="GO:2000427">
    <property type="term" value="P:positive regulation of apoptotic cell clearance"/>
    <property type="evidence" value="ECO:0000316"/>
    <property type="project" value="BHF-UCL"/>
</dbReference>
<dbReference type="CDD" id="cd00017">
    <property type="entry name" value="ANATO"/>
    <property type="match status" value="1"/>
</dbReference>
<dbReference type="CDD" id="cd02896">
    <property type="entry name" value="complement_C3_C4_C5"/>
    <property type="match status" value="1"/>
</dbReference>
<dbReference type="CDD" id="cd03584">
    <property type="entry name" value="NTR_complement_C4"/>
    <property type="match status" value="1"/>
</dbReference>
<dbReference type="FunFam" id="2.60.40.10:FF:000155">
    <property type="entry name" value="complement C3 isoform X1"/>
    <property type="match status" value="1"/>
</dbReference>
<dbReference type="FunFam" id="2.60.40.690:FF:000002">
    <property type="entry name" value="Complement C4 isoform-A"/>
    <property type="match status" value="1"/>
</dbReference>
<dbReference type="FunFam" id="1.20.91.20:FF:000002">
    <property type="entry name" value="Complement C4-A"/>
    <property type="match status" value="1"/>
</dbReference>
<dbReference type="FunFam" id="1.20.91.20:FF:000003">
    <property type="entry name" value="Complement C4-A"/>
    <property type="match status" value="1"/>
</dbReference>
<dbReference type="FunFam" id="1.50.10.20:FF:000010">
    <property type="entry name" value="Complement C4-A"/>
    <property type="match status" value="1"/>
</dbReference>
<dbReference type="FunFam" id="2.20.130.20:FF:000002">
    <property type="entry name" value="Complement C4-A"/>
    <property type="match status" value="1"/>
</dbReference>
<dbReference type="FunFam" id="2.40.50.120:FF:000009">
    <property type="entry name" value="Complement C4-A"/>
    <property type="match status" value="1"/>
</dbReference>
<dbReference type="FunFam" id="2.60.120.1540:FF:000001">
    <property type="entry name" value="Complement C4-A"/>
    <property type="match status" value="1"/>
</dbReference>
<dbReference type="FunFam" id="2.60.40.10:FF:000803">
    <property type="entry name" value="Complement C4-A"/>
    <property type="match status" value="1"/>
</dbReference>
<dbReference type="FunFam" id="2.60.40.1930:FF:000004">
    <property type="entry name" value="Complement C4-A"/>
    <property type="match status" value="1"/>
</dbReference>
<dbReference type="FunFam" id="2.60.40.1930:FF:000007">
    <property type="entry name" value="Complement C4-A"/>
    <property type="match status" value="1"/>
</dbReference>
<dbReference type="FunFam" id="2.60.40.1930:FF:000005">
    <property type="entry name" value="complement C4-A isoform X3"/>
    <property type="match status" value="1"/>
</dbReference>
<dbReference type="FunFam" id="6.20.50.160:FF:000001">
    <property type="entry name" value="Complement component 4"/>
    <property type="match status" value="1"/>
</dbReference>
<dbReference type="FunFam" id="2.60.40.1940:FF:000001">
    <property type="entry name" value="Complement component C3"/>
    <property type="match status" value="1"/>
</dbReference>
<dbReference type="FunFam" id="2.60.120.1540:FF:000006">
    <property type="entry name" value="MHC-linked complement C4"/>
    <property type="match status" value="1"/>
</dbReference>
<dbReference type="Gene3D" id="1.50.10.20">
    <property type="match status" value="1"/>
</dbReference>
<dbReference type="Gene3D" id="2.20.130.20">
    <property type="match status" value="1"/>
</dbReference>
<dbReference type="Gene3D" id="2.40.50.120">
    <property type="match status" value="1"/>
</dbReference>
<dbReference type="Gene3D" id="2.60.120.1540">
    <property type="match status" value="1"/>
</dbReference>
<dbReference type="Gene3D" id="2.60.40.1930">
    <property type="match status" value="3"/>
</dbReference>
<dbReference type="Gene3D" id="2.60.40.1940">
    <property type="match status" value="1"/>
</dbReference>
<dbReference type="Gene3D" id="6.20.50.160">
    <property type="match status" value="1"/>
</dbReference>
<dbReference type="Gene3D" id="2.60.40.690">
    <property type="entry name" value="Alpha-macroglobulin, receptor-binding domain"/>
    <property type="match status" value="1"/>
</dbReference>
<dbReference type="Gene3D" id="1.20.91.20">
    <property type="entry name" value="Anaphylotoxins (complement system)"/>
    <property type="match status" value="2"/>
</dbReference>
<dbReference type="Gene3D" id="2.60.40.10">
    <property type="entry name" value="Immunoglobulins"/>
    <property type="match status" value="2"/>
</dbReference>
<dbReference type="InterPro" id="IPR009048">
    <property type="entry name" value="A-macroglobulin_rcpt-bd"/>
</dbReference>
<dbReference type="InterPro" id="IPR036595">
    <property type="entry name" value="A-macroglobulin_rcpt-bd_sf"/>
</dbReference>
<dbReference type="InterPro" id="IPR050473">
    <property type="entry name" value="A2M/Complement_sys"/>
</dbReference>
<dbReference type="InterPro" id="IPR011625">
    <property type="entry name" value="A2M_N_BRD"/>
</dbReference>
<dbReference type="InterPro" id="IPR047565">
    <property type="entry name" value="Alpha-macroglob_thiol-ester_cl"/>
</dbReference>
<dbReference type="InterPro" id="IPR011626">
    <property type="entry name" value="Alpha-macroglobulin_TED"/>
</dbReference>
<dbReference type="InterPro" id="IPR000020">
    <property type="entry name" value="Anaphylatoxin/fibulin"/>
</dbReference>
<dbReference type="InterPro" id="IPR018081">
    <property type="entry name" value="Anaphylatoxin_comp_syst"/>
</dbReference>
<dbReference type="InterPro" id="IPR001840">
    <property type="entry name" value="Anaphylatoxn_comp_syst_dom"/>
</dbReference>
<dbReference type="InterPro" id="IPR048847">
    <property type="entry name" value="C4_MG1"/>
</dbReference>
<dbReference type="InterPro" id="IPR054587">
    <property type="entry name" value="CO4A-B_CUB_C"/>
</dbReference>
<dbReference type="InterPro" id="IPR013783">
    <property type="entry name" value="Ig-like_fold"/>
</dbReference>
<dbReference type="InterPro" id="IPR001599">
    <property type="entry name" value="Macroglobln_a2"/>
</dbReference>
<dbReference type="InterPro" id="IPR019742">
    <property type="entry name" value="MacrogloblnA2_CS"/>
</dbReference>
<dbReference type="InterPro" id="IPR002890">
    <property type="entry name" value="MG2"/>
</dbReference>
<dbReference type="InterPro" id="IPR041555">
    <property type="entry name" value="MG3"/>
</dbReference>
<dbReference type="InterPro" id="IPR040839">
    <property type="entry name" value="MG4"/>
</dbReference>
<dbReference type="InterPro" id="IPR001134">
    <property type="entry name" value="Netrin_domain"/>
</dbReference>
<dbReference type="InterPro" id="IPR018933">
    <property type="entry name" value="Netrin_module_non-TIMP"/>
</dbReference>
<dbReference type="InterPro" id="IPR008930">
    <property type="entry name" value="Terpenoid_cyclase/PrenylTrfase"/>
</dbReference>
<dbReference type="InterPro" id="IPR008993">
    <property type="entry name" value="TIMP-like_OB-fold"/>
</dbReference>
<dbReference type="PANTHER" id="PTHR11412:SF86">
    <property type="entry name" value="COMPLEMENT C4-A-RELATED"/>
    <property type="match status" value="1"/>
</dbReference>
<dbReference type="PANTHER" id="PTHR11412">
    <property type="entry name" value="MACROGLOBULIN / COMPLEMENT"/>
    <property type="match status" value="1"/>
</dbReference>
<dbReference type="Pfam" id="PF00207">
    <property type="entry name" value="A2M"/>
    <property type="match status" value="1"/>
</dbReference>
<dbReference type="Pfam" id="PF07703">
    <property type="entry name" value="A2M_BRD"/>
    <property type="match status" value="1"/>
</dbReference>
<dbReference type="Pfam" id="PF07677">
    <property type="entry name" value="A2M_recep"/>
    <property type="match status" value="1"/>
</dbReference>
<dbReference type="Pfam" id="PF01821">
    <property type="entry name" value="ANATO"/>
    <property type="match status" value="1"/>
</dbReference>
<dbReference type="Pfam" id="PF21145">
    <property type="entry name" value="C4_MG1"/>
    <property type="match status" value="1"/>
</dbReference>
<dbReference type="Pfam" id="PF22661">
    <property type="entry name" value="CO4A-B_CUB_C"/>
    <property type="match status" value="1"/>
</dbReference>
<dbReference type="Pfam" id="PF01835">
    <property type="entry name" value="MG2"/>
    <property type="match status" value="1"/>
</dbReference>
<dbReference type="Pfam" id="PF17791">
    <property type="entry name" value="MG3"/>
    <property type="match status" value="1"/>
</dbReference>
<dbReference type="Pfam" id="PF17789">
    <property type="entry name" value="MG4"/>
    <property type="match status" value="1"/>
</dbReference>
<dbReference type="Pfam" id="PF01759">
    <property type="entry name" value="NTR"/>
    <property type="match status" value="1"/>
</dbReference>
<dbReference type="Pfam" id="PF07678">
    <property type="entry name" value="TED_complement"/>
    <property type="match status" value="1"/>
</dbReference>
<dbReference type="PRINTS" id="PR00004">
    <property type="entry name" value="ANAPHYLATOXN"/>
</dbReference>
<dbReference type="SFLD" id="SFLDG01179">
    <property type="entry name" value="Complement_C3/C4_Like"/>
    <property type="match status" value="1"/>
</dbReference>
<dbReference type="SMART" id="SM01360">
    <property type="entry name" value="A2M"/>
    <property type="match status" value="1"/>
</dbReference>
<dbReference type="SMART" id="SM01359">
    <property type="entry name" value="A2M_N_2"/>
    <property type="match status" value="1"/>
</dbReference>
<dbReference type="SMART" id="SM01361">
    <property type="entry name" value="A2M_recep"/>
    <property type="match status" value="1"/>
</dbReference>
<dbReference type="SMART" id="SM00104">
    <property type="entry name" value="ANATO"/>
    <property type="match status" value="1"/>
</dbReference>
<dbReference type="SMART" id="SM00643">
    <property type="entry name" value="C345C"/>
    <property type="match status" value="1"/>
</dbReference>
<dbReference type="SMART" id="SM01419">
    <property type="entry name" value="Thiol-ester_cl"/>
    <property type="match status" value="1"/>
</dbReference>
<dbReference type="SUPFAM" id="SSF49410">
    <property type="entry name" value="Alpha-macroglobulin receptor domain"/>
    <property type="match status" value="1"/>
</dbReference>
<dbReference type="SUPFAM" id="SSF47686">
    <property type="entry name" value="Anaphylotoxins (complement system)"/>
    <property type="match status" value="1"/>
</dbReference>
<dbReference type="SUPFAM" id="SSF48239">
    <property type="entry name" value="Terpenoid cyclases/Protein prenyltransferases"/>
    <property type="match status" value="1"/>
</dbReference>
<dbReference type="SUPFAM" id="SSF50242">
    <property type="entry name" value="TIMP-like"/>
    <property type="match status" value="1"/>
</dbReference>
<dbReference type="PROSITE" id="PS00477">
    <property type="entry name" value="ALPHA_2_MACROGLOBULIN"/>
    <property type="match status" value="1"/>
</dbReference>
<dbReference type="PROSITE" id="PS01177">
    <property type="entry name" value="ANAPHYLATOXIN_1"/>
    <property type="match status" value="1"/>
</dbReference>
<dbReference type="PROSITE" id="PS01178">
    <property type="entry name" value="ANAPHYLATOXIN_2"/>
    <property type="match status" value="1"/>
</dbReference>
<dbReference type="PROSITE" id="PS50189">
    <property type="entry name" value="NTR"/>
    <property type="match status" value="1"/>
</dbReference>
<proteinExistence type="evidence at protein level"/>
<organism>
    <name type="scientific">Homo sapiens</name>
    <name type="common">Human</name>
    <dbReference type="NCBI Taxonomy" id="9606"/>
    <lineage>
        <taxon>Eukaryota</taxon>
        <taxon>Metazoa</taxon>
        <taxon>Chordata</taxon>
        <taxon>Craniata</taxon>
        <taxon>Vertebrata</taxon>
        <taxon>Euteleostomi</taxon>
        <taxon>Mammalia</taxon>
        <taxon>Eutheria</taxon>
        <taxon>Euarchontoglires</taxon>
        <taxon>Primates</taxon>
        <taxon>Haplorrhini</taxon>
        <taxon>Catarrhini</taxon>
        <taxon>Hominidae</taxon>
        <taxon>Homo</taxon>
    </lineage>
</organism>
<feature type="signal peptide">
    <location>
        <begin position="1"/>
        <end position="19"/>
    </location>
</feature>
<feature type="chain" id="PRO_0000005966" description="Complement C4 beta chain">
    <location>
        <begin position="20"/>
        <end position="675"/>
    </location>
</feature>
<feature type="propeptide" id="PRO_0000005967" evidence="39">
    <location>
        <begin position="676"/>
        <end position="679"/>
    </location>
</feature>
<feature type="chain" id="PRO_0000005968" description="Complement C4-A alpha chain">
    <location>
        <begin position="680"/>
        <end position="1446"/>
    </location>
</feature>
<feature type="chain" id="PRO_0000005969" description="C4a anaphylatoxin" evidence="39">
    <location>
        <begin position="680"/>
        <end position="756"/>
    </location>
</feature>
<feature type="chain" id="PRO_0000005970" description="Complement C4b-A">
    <location>
        <begin position="757"/>
        <end position="1446"/>
    </location>
</feature>
<feature type="chain" id="PRO_0000042698" description="Complement C4d-A">
    <location>
        <begin position="957"/>
        <end position="1336"/>
    </location>
</feature>
<feature type="propeptide" id="PRO_0000005971">
    <location>
        <begin position="1447"/>
        <end position="1453"/>
    </location>
</feature>
<feature type="chain" id="PRO_0000005972" description="Complement C4 gamma chain">
    <location>
        <begin position="1454"/>
        <end position="1744"/>
    </location>
</feature>
<feature type="domain" description="Anaphylatoxin-like" evidence="1">
    <location>
        <begin position="702"/>
        <end position="736"/>
    </location>
</feature>
<feature type="domain" description="NTR" evidence="2">
    <location>
        <begin position="1595"/>
        <end position="1742"/>
    </location>
</feature>
<feature type="site" description="Cleavage; by C1S, MASP2 and GZMK" evidence="12">
    <location>
        <begin position="756"/>
        <end position="757"/>
    </location>
</feature>
<feature type="modified residue" description="Phosphoserine; by FAM20C" evidence="26">
    <location>
        <position position="918"/>
    </location>
</feature>
<feature type="modified residue" description="Sulfotyrosine" evidence="35">
    <location>
        <position position="1417"/>
    </location>
</feature>
<feature type="modified residue" description="Sulfotyrosine" evidence="35">
    <location>
        <position position="1420"/>
    </location>
</feature>
<feature type="modified residue" description="Sulfotyrosine" evidence="35">
    <location>
        <position position="1422"/>
    </location>
</feature>
<feature type="glycosylation site" description="N-linked (GlcNAc...) asparagine" evidence="7 17 19 29">
    <location>
        <position position="226"/>
    </location>
</feature>
<feature type="glycosylation site" description="N-linked (GlcNAc...) asparagine" evidence="13 29">
    <location>
        <position position="862"/>
    </location>
</feature>
<feature type="glycosylation site" description="O-linked (GalNAc...) threonine" evidence="23">
    <location>
        <position position="1244"/>
    </location>
</feature>
<feature type="glycosylation site" description="N-linked (GlcNAc...) (complex) asparagine" evidence="13 17 18 19">
    <location>
        <position position="1328"/>
    </location>
</feature>
<feature type="glycosylation site" description="N-linked (GlcNAc...) asparagine" evidence="10 13 19">
    <location>
        <position position="1391"/>
    </location>
</feature>
<feature type="disulfide bond" evidence="29 32 58 59 60 62 63 64">
    <location>
        <begin position="68"/>
        <end position="97"/>
    </location>
</feature>
<feature type="disulfide bond" description="Interchain (with C-820)" evidence="29 32 58 59 60 62 63 64">
    <location>
        <position position="567"/>
    </location>
</feature>
<feature type="disulfide bond" evidence="58 59 60 62 63 64">
    <location>
        <begin position="635"/>
        <end position="669"/>
    </location>
</feature>
<feature type="disulfide bond" evidence="29 58 59">
    <location>
        <begin position="702"/>
        <end position="728"/>
    </location>
</feature>
<feature type="disulfide bond" evidence="29 58 59">
    <location>
        <begin position="703"/>
        <end position="735"/>
    </location>
</feature>
<feature type="disulfide bond" evidence="29 58 59">
    <location>
        <begin position="716"/>
        <end position="736"/>
    </location>
</feature>
<feature type="disulfide bond" description="Interchain (with C-567)" evidence="29 31 32 58 59 60 61 62 63 64">
    <location>
        <position position="820"/>
    </location>
</feature>
<feature type="disulfide bond" description="Interchain (with C-1590)" evidence="29 31 32 58 59 60 61 62 63 64">
    <location>
        <position position="876"/>
    </location>
</feature>
<feature type="disulfide bond" description="Interchain (with C-1566)" evidence="29 31 32 58 59 60 61 62 63 64">
    <location>
        <position position="1394"/>
    </location>
</feature>
<feature type="disulfide bond" evidence="29 32 58 59 60 62 63 64">
    <location>
        <begin position="1471"/>
        <end position="1535"/>
    </location>
</feature>
<feature type="disulfide bond" description="Interchain (with C-1394)" evidence="29 32 58 59 60 62 63 64">
    <location>
        <position position="1566"/>
    </location>
</feature>
<feature type="disulfide bond" evidence="29 32 58 59 60 62 63 64">
    <location>
        <begin position="1583"/>
        <end position="1588"/>
    </location>
</feature>
<feature type="disulfide bond" description="Interchain (with C-876)" evidence="29 32 58 59 60 62 63 64">
    <location>
        <position position="1590"/>
    </location>
</feature>
<feature type="disulfide bond" evidence="29 58 59 60">
    <location>
        <begin position="1595"/>
        <end position="1673"/>
    </location>
</feature>
<feature type="disulfide bond" evidence="29 58 59 60">
    <location>
        <begin position="1618"/>
        <end position="1742"/>
    </location>
</feature>
<feature type="disulfide bond" evidence="29 58 59 60">
    <location>
        <begin position="1718"/>
        <end position="1727"/>
    </location>
</feature>
<feature type="cross-link" description="Isoglutamyl cysteine thioester (Cys-Gln)" evidence="6">
    <location>
        <begin position="1010"/>
        <end position="1013"/>
    </location>
</feature>
<feature type="splice variant" id="VSP_046252" description="In isoform 2." evidence="51">
    <location>
        <begin position="1458"/>
        <end position="1503"/>
    </location>
</feature>
<feature type="sequence variant" id="VAR_069154" description="In dbSNP:rs1554297620.">
    <original>L</original>
    <variation>V</variation>
    <location>
        <position position="141"/>
    </location>
</feature>
<feature type="sequence variant" id="VAR_019778" description="In allotype C4A3a, allotype C4A6; dbSNP:rs392610." evidence="9 11 21">
    <original>S</original>
    <variation>Y</variation>
    <location>
        <position position="347"/>
    </location>
</feature>
<feature type="sequence variant" id="VAR_069155" description="In allotype C4A4." evidence="41">
    <original>V</original>
    <variation>A</variation>
    <location>
        <position position="418"/>
    </location>
</feature>
<feature type="sequence variant" id="VAR_001987" description="In allotype C4A6; dbSNP:rs1554297700." evidence="50">
    <original>R</original>
    <variation>W</variation>
    <location>
        <position position="477"/>
    </location>
</feature>
<feature type="sequence variant" id="VAR_069156" description="In dbSNP:rs1554297705." evidence="50">
    <original>H</original>
    <variation>P</variation>
    <location>
        <position position="549"/>
    </location>
</feature>
<feature type="sequence variant" id="VAR_001988" description="In allotype C4A3a; dbSNP:rs1215093373." evidence="21">
    <original>P</original>
    <variation>L</variation>
    <location>
        <position position="726"/>
    </location>
</feature>
<feature type="sequence variant" id="VAR_019779" evidence="45">
    <original>D</original>
    <variation>N</variation>
    <location>
        <position position="727"/>
    </location>
</feature>
<feature type="sequence variant" id="VAR_019780" description="In dbSNP:rs429329." evidence="50">
    <original>A</original>
    <variation>T</variation>
    <location>
        <position position="907"/>
    </location>
</feature>
<feature type="sequence variant" id="VAR_069158" description="In allotype C4A1, allotype C4A2; dbSNP:rs147162052." evidence="11 33 50">
    <original>D</original>
    <variation>G</variation>
    <location>
        <position position="1073"/>
    </location>
</feature>
<feature type="sequence variant" id="VAR_069159" description="In allotype C4A1; dbSNP:rs17874654." evidence="9 33 49 50">
    <original>N</original>
    <variation>S</variation>
    <location>
        <position position="1176"/>
    </location>
</feature>
<feature type="sequence variant" id="VAR_001992" description="In allotype C4A4." evidence="41">
    <original>T</original>
    <variation>S</variation>
    <location>
        <position position="1201"/>
    </location>
</feature>
<feature type="sequence variant" id="VAR_001993" description="In allotype C4A1, allotype C4A13; dbSNP:rs28357075." evidence="33 42 50">
    <original>V</original>
    <variation>A</variation>
    <location>
        <position position="1207"/>
    </location>
</feature>
<feature type="sequence variant" id="VAR_001994" description="In allotype C4A1, allotype C4A13; dbSNP:rs28357076." evidence="33 42 50">
    <original>L</original>
    <variation>R</variation>
    <location>
        <position position="1210"/>
    </location>
</feature>
<feature type="sequence variant" id="VAR_001995" description="In allotype C4A1, allotype C4A3a, allotype C4A6; dbSNP:rs201016130." evidence="9 11 21 33 42 49">
    <original>S</original>
    <variation>A</variation>
    <location>
        <position position="1286"/>
    </location>
</feature>
<feature type="sequence conflict" description="In Ref. 5; AAI71786." evidence="54" ref="5">
    <original>A</original>
    <variation>V</variation>
    <location>
        <position position="217"/>
    </location>
</feature>
<feature type="sequence conflict" description="In Ref. 5; AAH63289." evidence="54" ref="5">
    <original>A</original>
    <variation>S</variation>
    <location>
        <position position="643"/>
    </location>
</feature>
<feature type="sequence conflict" description="In Ref. 5; AAH63289." evidence="54" ref="5">
    <original>R</original>
    <variation>W</variation>
    <location>
        <position position="729"/>
    </location>
</feature>
<feature type="sequence conflict" description="In Ref. 11; AA sequence, 12; AA sequence and 13; AA sequence." evidence="54" ref="11 12 13">
    <original>Q</original>
    <variation>E</variation>
    <location>
        <position position="1013"/>
    </location>
</feature>
<feature type="sequence conflict" description="In Ref. 12; AA sequence." evidence="54" ref="12">
    <original>SQ</original>
    <variation>IA</variation>
    <location>
        <begin position="1109"/>
        <end position="1110"/>
    </location>
</feature>
<feature type="sequence conflict" description="In Ref. 5; AAH63289." evidence="54" ref="5">
    <original>K</original>
    <variation>I</variation>
    <location>
        <position position="1182"/>
    </location>
</feature>
<feature type="sequence conflict" description="In Ref. 5; AAH63289." evidence="54" ref="5">
    <original>P</original>
    <variation>Q</variation>
    <location>
        <position position="1245"/>
    </location>
</feature>
<feature type="sequence conflict" description="In Ref. 12; AA sequence and 16; AA sequence." evidence="54" ref="12 16">
    <original>H</original>
    <variation>V</variation>
    <location>
        <position position="1271"/>
    </location>
</feature>
<feature type="sequence conflict" description="In Ref. 12; AA sequence and 16; AA sequence." evidence="54" ref="12 16">
    <original>R</original>
    <variation>V</variation>
    <location>
        <position position="1300"/>
    </location>
</feature>
<feature type="sequence conflict" description="In Ref. 1; AAB59537." evidence="54" ref="1">
    <location>
        <begin position="1419"/>
        <end position="1421"/>
    </location>
</feature>
<feature type="sequence conflict" description="In Ref. 5; AAH12372." evidence="54" ref="5">
    <original>D</original>
    <variation>G</variation>
    <location>
        <position position="1635"/>
    </location>
</feature>
<feature type="sequence conflict" description="In Ref. 5; AAI44547/AAI46850." evidence="54" ref="5">
    <original>R</original>
    <variation>S</variation>
    <location>
        <position position="1637"/>
    </location>
</feature>
<feature type="sequence conflict" description="In Ref. 5; AAI71786." evidence="54" ref="5">
    <original>E</original>
    <variation>G</variation>
    <location>
        <position position="1678"/>
    </location>
</feature>
<feature type="sequence conflict" description="In Ref. 5; AAH12372." evidence="54" ref="5">
    <original>D</original>
    <variation>E</variation>
    <location>
        <position position="1704"/>
    </location>
</feature>
<feature type="strand" evidence="66">
    <location>
        <begin position="22"/>
        <end position="32"/>
    </location>
</feature>
<feature type="strand" evidence="66">
    <location>
        <begin position="37"/>
        <end position="45"/>
    </location>
</feature>
<feature type="strand" evidence="66">
    <location>
        <begin position="51"/>
        <end position="59"/>
    </location>
</feature>
<feature type="strand" evidence="66">
    <location>
        <begin position="67"/>
        <end position="69"/>
    </location>
</feature>
<feature type="strand" evidence="66">
    <location>
        <begin position="72"/>
        <end position="77"/>
    </location>
</feature>
<feature type="strand" evidence="66">
    <location>
        <begin position="82"/>
        <end position="87"/>
    </location>
</feature>
<feature type="helix" evidence="66">
    <location>
        <begin position="91"/>
        <end position="97"/>
    </location>
</feature>
<feature type="helix" evidence="66">
    <location>
        <begin position="99"/>
        <end position="101"/>
    </location>
</feature>
<feature type="strand" evidence="66">
    <location>
        <begin position="107"/>
        <end position="113"/>
    </location>
</feature>
<feature type="helix" evidence="66">
    <location>
        <begin position="116"/>
        <end position="119"/>
    </location>
</feature>
<feature type="strand" evidence="66">
    <location>
        <begin position="126"/>
        <end position="135"/>
    </location>
</feature>
<feature type="strand" evidence="66">
    <location>
        <begin position="139"/>
        <end position="146"/>
    </location>
</feature>
<feature type="strand" evidence="66">
    <location>
        <begin position="148"/>
        <end position="150"/>
    </location>
</feature>
<feature type="strand" evidence="66">
    <location>
        <begin position="155"/>
        <end position="163"/>
    </location>
</feature>
<feature type="strand" evidence="66">
    <location>
        <begin position="167"/>
        <end position="169"/>
    </location>
</feature>
<feature type="strand" evidence="66">
    <location>
        <begin position="174"/>
        <end position="179"/>
    </location>
</feature>
<feature type="strand" evidence="66">
    <location>
        <begin position="181"/>
        <end position="183"/>
    </location>
</feature>
<feature type="strand" evidence="66">
    <location>
        <begin position="185"/>
        <end position="191"/>
    </location>
</feature>
<feature type="strand" evidence="66">
    <location>
        <begin position="194"/>
        <end position="203"/>
    </location>
</feature>
<feature type="strand" evidence="66">
    <location>
        <begin position="210"/>
        <end position="221"/>
    </location>
</feature>
<feature type="strand" evidence="66">
    <location>
        <begin position="228"/>
        <end position="233"/>
    </location>
</feature>
<feature type="strand" evidence="66">
    <location>
        <begin position="240"/>
        <end position="253"/>
    </location>
</feature>
<feature type="strand" evidence="66">
    <location>
        <begin position="262"/>
        <end position="270"/>
    </location>
</feature>
<feature type="strand" evidence="66">
    <location>
        <begin position="278"/>
        <end position="287"/>
    </location>
</feature>
<feature type="strand" evidence="66">
    <location>
        <begin position="289"/>
        <end position="291"/>
    </location>
</feature>
<feature type="strand" evidence="66">
    <location>
        <begin position="293"/>
        <end position="295"/>
    </location>
</feature>
<feature type="strand" evidence="66">
    <location>
        <begin position="301"/>
        <end position="304"/>
    </location>
</feature>
<feature type="strand" evidence="66">
    <location>
        <begin position="309"/>
        <end position="314"/>
    </location>
</feature>
<feature type="helix" evidence="66">
    <location>
        <begin position="316"/>
        <end position="325"/>
    </location>
</feature>
<feature type="helix" evidence="66">
    <location>
        <begin position="330"/>
        <end position="332"/>
    </location>
</feature>
<feature type="strand" evidence="66">
    <location>
        <begin position="337"/>
        <end position="346"/>
    </location>
</feature>
<feature type="turn" evidence="66">
    <location>
        <begin position="347"/>
        <end position="349"/>
    </location>
</feature>
<feature type="strand" evidence="66">
    <location>
        <begin position="352"/>
        <end position="357"/>
    </location>
</feature>
<feature type="strand" evidence="66">
    <location>
        <begin position="361"/>
        <end position="364"/>
    </location>
</feature>
<feature type="strand" evidence="66">
    <location>
        <begin position="366"/>
        <end position="370"/>
    </location>
</feature>
<feature type="strand" evidence="66">
    <location>
        <begin position="372"/>
        <end position="374"/>
    </location>
</feature>
<feature type="strand" evidence="66">
    <location>
        <begin position="382"/>
        <end position="392"/>
    </location>
</feature>
<feature type="strand" evidence="66">
    <location>
        <begin position="395"/>
        <end position="397"/>
    </location>
</feature>
<feature type="strand" evidence="66">
    <location>
        <begin position="402"/>
        <end position="409"/>
    </location>
</feature>
<feature type="strand" evidence="66">
    <location>
        <begin position="412"/>
        <end position="414"/>
    </location>
</feature>
<feature type="strand" evidence="66">
    <location>
        <begin position="417"/>
        <end position="424"/>
    </location>
</feature>
<feature type="strand" evidence="66">
    <location>
        <begin position="430"/>
        <end position="436"/>
    </location>
</feature>
<feature type="strand" evidence="66">
    <location>
        <begin position="442"/>
        <end position="450"/>
    </location>
</feature>
<feature type="strand" evidence="66">
    <location>
        <begin position="452"/>
        <end position="454"/>
    </location>
</feature>
<feature type="strand" evidence="66">
    <location>
        <begin position="456"/>
        <end position="463"/>
    </location>
</feature>
<feature type="strand" evidence="66">
    <location>
        <begin position="472"/>
        <end position="476"/>
    </location>
</feature>
<feature type="strand" evidence="66">
    <location>
        <begin position="488"/>
        <end position="498"/>
    </location>
</feature>
<feature type="strand" evidence="66">
    <location>
        <begin position="504"/>
        <end position="511"/>
    </location>
</feature>
<feature type="strand" evidence="66">
    <location>
        <begin position="514"/>
        <end position="522"/>
    </location>
</feature>
<feature type="strand" evidence="66">
    <location>
        <begin position="527"/>
        <end position="532"/>
    </location>
</feature>
<feature type="turn" evidence="66">
    <location>
        <begin position="535"/>
        <end position="537"/>
    </location>
</feature>
<feature type="strand" evidence="66">
    <location>
        <begin position="539"/>
        <end position="549"/>
    </location>
</feature>
<feature type="strand" evidence="66">
    <location>
        <begin position="552"/>
        <end position="561"/>
    </location>
</feature>
<feature type="strand" evidence="66">
    <location>
        <begin position="571"/>
        <end position="575"/>
    </location>
</feature>
<feature type="strand" evidence="66">
    <location>
        <begin position="586"/>
        <end position="605"/>
    </location>
</feature>
<feature type="helix" evidence="66">
    <location>
        <begin position="607"/>
        <end position="611"/>
    </location>
</feature>
<feature type="helix" evidence="66">
    <location>
        <begin position="621"/>
        <end position="628"/>
    </location>
</feature>
<feature type="helix" evidence="66">
    <location>
        <begin position="629"/>
        <end position="631"/>
    </location>
</feature>
<feature type="helix" evidence="66">
    <location>
        <begin position="643"/>
        <end position="650"/>
    </location>
</feature>
<feature type="strand" evidence="66">
    <location>
        <begin position="652"/>
        <end position="655"/>
    </location>
</feature>
<feature type="strand" evidence="66">
    <location>
        <begin position="657"/>
        <end position="660"/>
    </location>
</feature>
<feature type="turn" evidence="66">
    <location>
        <begin position="666"/>
        <end position="668"/>
    </location>
</feature>
<feature type="strand" evidence="67">
    <location>
        <begin position="780"/>
        <end position="782"/>
    </location>
</feature>
<feature type="strand" evidence="67">
    <location>
        <begin position="786"/>
        <end position="798"/>
    </location>
</feature>
<feature type="strand" evidence="67">
    <location>
        <begin position="804"/>
        <end position="814"/>
    </location>
</feature>
<feature type="turn" evidence="67">
    <location>
        <begin position="815"/>
        <end position="817"/>
    </location>
</feature>
<feature type="strand" evidence="67">
    <location>
        <begin position="818"/>
        <end position="821"/>
    </location>
</feature>
<feature type="strand" evidence="67">
    <location>
        <begin position="825"/>
        <end position="829"/>
    </location>
</feature>
<feature type="strand" evidence="67">
    <location>
        <begin position="832"/>
        <end position="837"/>
    </location>
</feature>
<feature type="strand" evidence="67">
    <location>
        <begin position="849"/>
        <end position="851"/>
    </location>
</feature>
<feature type="strand" evidence="67">
    <location>
        <begin position="853"/>
        <end position="857"/>
    </location>
</feature>
<feature type="strand" evidence="67">
    <location>
        <begin position="859"/>
        <end position="861"/>
    </location>
</feature>
<feature type="strand" evidence="67">
    <location>
        <begin position="863"/>
        <end position="869"/>
    </location>
</feature>
<feature type="strand" evidence="66">
    <location>
        <begin position="875"/>
        <end position="877"/>
    </location>
</feature>
<feature type="helix" evidence="67">
    <location>
        <begin position="878"/>
        <end position="880"/>
    </location>
</feature>
<feature type="strand" evidence="67">
    <location>
        <begin position="885"/>
        <end position="889"/>
    </location>
</feature>
<feature type="strand" evidence="67">
    <location>
        <begin position="894"/>
        <end position="896"/>
    </location>
</feature>
<feature type="strand" evidence="67">
    <location>
        <begin position="899"/>
        <end position="903"/>
    </location>
</feature>
<feature type="strand" evidence="67">
    <location>
        <begin position="906"/>
        <end position="921"/>
    </location>
</feature>
<feature type="strand" evidence="67">
    <location>
        <begin position="924"/>
        <end position="934"/>
    </location>
</feature>
<feature type="strand" evidence="67">
    <location>
        <begin position="936"/>
        <end position="948"/>
    </location>
</feature>
<feature type="turn" evidence="67">
    <location>
        <begin position="950"/>
        <end position="953"/>
    </location>
</feature>
<feature type="strand" evidence="67">
    <location>
        <begin position="954"/>
        <end position="960"/>
    </location>
</feature>
<feature type="strand" evidence="67">
    <location>
        <begin position="973"/>
        <end position="981"/>
    </location>
</feature>
<feature type="helix" evidence="65">
    <location>
        <begin position="997"/>
        <end position="1001"/>
    </location>
</feature>
<feature type="helix" evidence="65">
    <location>
        <begin position="1011"/>
        <end position="1030"/>
    </location>
</feature>
<feature type="strand" evidence="67">
    <location>
        <begin position="1035"/>
        <end position="1037"/>
    </location>
</feature>
<feature type="helix" evidence="65">
    <location>
        <begin position="1041"/>
        <end position="1057"/>
    </location>
</feature>
<feature type="turn" evidence="66">
    <location>
        <begin position="1062"/>
        <end position="1064"/>
    </location>
</feature>
<feature type="strand" evidence="67">
    <location>
        <begin position="1068"/>
        <end position="1072"/>
    </location>
</feature>
<feature type="helix" evidence="65">
    <location>
        <begin position="1076"/>
        <end position="1089"/>
    </location>
</feature>
<feature type="helix" evidence="65">
    <location>
        <begin position="1090"/>
        <end position="1092"/>
    </location>
</feature>
<feature type="helix" evidence="65">
    <location>
        <begin position="1097"/>
        <end position="1107"/>
    </location>
</feature>
<feature type="helix" evidence="65">
    <location>
        <begin position="1108"/>
        <end position="1110"/>
    </location>
</feature>
<feature type="strand" evidence="67">
    <location>
        <begin position="1113"/>
        <end position="1115"/>
    </location>
</feature>
<feature type="helix" evidence="65">
    <location>
        <begin position="1126"/>
        <end position="1132"/>
    </location>
</feature>
<feature type="helix" evidence="65">
    <location>
        <begin position="1137"/>
        <end position="1153"/>
    </location>
</feature>
<feature type="turn" evidence="65">
    <location>
        <begin position="1158"/>
        <end position="1161"/>
    </location>
</feature>
<feature type="helix" evidence="65">
    <location>
        <begin position="1162"/>
        <end position="1185"/>
    </location>
</feature>
<feature type="helix" evidence="65">
    <location>
        <begin position="1190"/>
        <end position="1202"/>
    </location>
</feature>
<feature type="helix" evidence="65">
    <location>
        <begin position="1207"/>
        <end position="1218"/>
    </location>
</feature>
<feature type="strand" evidence="66">
    <location>
        <begin position="1225"/>
        <end position="1228"/>
    </location>
</feature>
<feature type="helix" evidence="65">
    <location>
        <begin position="1259"/>
        <end position="1275"/>
    </location>
</feature>
<feature type="strand" evidence="67">
    <location>
        <begin position="1276"/>
        <end position="1278"/>
    </location>
</feature>
<feature type="helix" evidence="65">
    <location>
        <begin position="1280"/>
        <end position="1292"/>
    </location>
</feature>
<feature type="helix" evidence="66">
    <location>
        <begin position="1294"/>
        <end position="1297"/>
    </location>
</feature>
<feature type="helix" evidence="65">
    <location>
        <begin position="1302"/>
        <end position="1319"/>
    </location>
</feature>
<feature type="strand" evidence="67">
    <location>
        <begin position="1326"/>
        <end position="1335"/>
    </location>
</feature>
<feature type="strand" evidence="67">
    <location>
        <begin position="1338"/>
        <end position="1350"/>
    </location>
</feature>
<feature type="strand" evidence="67">
    <location>
        <begin position="1354"/>
        <end position="1356"/>
    </location>
</feature>
<feature type="strand" evidence="67">
    <location>
        <begin position="1362"/>
        <end position="1364"/>
    </location>
</feature>
<feature type="strand" evidence="67">
    <location>
        <begin position="1366"/>
        <end position="1370"/>
    </location>
</feature>
<feature type="strand" evidence="67">
    <location>
        <begin position="1372"/>
        <end position="1374"/>
    </location>
</feature>
<feature type="strand" evidence="67">
    <location>
        <begin position="1376"/>
        <end position="1386"/>
    </location>
</feature>
<feature type="strand" evidence="67">
    <location>
        <begin position="1395"/>
        <end position="1405"/>
    </location>
</feature>
<feature type="strand" evidence="66">
    <location>
        <begin position="1409"/>
        <end position="1411"/>
    </location>
</feature>
<feature type="strand" evidence="66">
    <location>
        <begin position="1465"/>
        <end position="1475"/>
    </location>
</feature>
<feature type="strand" evidence="66">
    <location>
        <begin position="1484"/>
        <end position="1489"/>
    </location>
</feature>
<feature type="strand" evidence="66">
    <location>
        <begin position="1494"/>
        <end position="1496"/>
    </location>
</feature>
<feature type="helix" evidence="66">
    <location>
        <begin position="1498"/>
        <end position="1506"/>
    </location>
</feature>
<feature type="strand" evidence="66">
    <location>
        <begin position="1511"/>
        <end position="1518"/>
    </location>
</feature>
<feature type="strand" evidence="66">
    <location>
        <begin position="1521"/>
        <end position="1527"/>
    </location>
</feature>
<feature type="strand" evidence="66">
    <location>
        <begin position="1534"/>
        <end position="1544"/>
    </location>
</feature>
<feature type="strand" evidence="66">
    <location>
        <begin position="1552"/>
        <end position="1560"/>
    </location>
</feature>
<feature type="strand" evidence="66">
    <location>
        <begin position="1564"/>
        <end position="1570"/>
    </location>
</feature>
<feature type="strand" evidence="66">
    <location>
        <begin position="1573"/>
        <end position="1575"/>
    </location>
</feature>
<feature type="strand" evidence="66">
    <location>
        <begin position="1581"/>
        <end position="1584"/>
    </location>
</feature>
<feature type="strand" evidence="66">
    <location>
        <begin position="1587"/>
        <end position="1590"/>
    </location>
</feature>
<feature type="helix" evidence="66">
    <location>
        <begin position="1613"/>
        <end position="1618"/>
    </location>
</feature>
<feature type="strand" evidence="66">
    <location>
        <begin position="1624"/>
        <end position="1637"/>
    </location>
</feature>
<feature type="strand" evidence="66">
    <location>
        <begin position="1640"/>
        <end position="1652"/>
    </location>
</feature>
<feature type="strand" evidence="66">
    <location>
        <begin position="1664"/>
        <end position="1670"/>
    </location>
</feature>
<feature type="strand" evidence="66">
    <location>
        <begin position="1681"/>
        <end position="1687"/>
    </location>
</feature>
<feature type="strand" evidence="66">
    <location>
        <begin position="1708"/>
        <end position="1711"/>
    </location>
</feature>
<feature type="helix" evidence="66">
    <location>
        <begin position="1716"/>
        <end position="1719"/>
    </location>
</feature>
<feature type="helix" evidence="66">
    <location>
        <begin position="1721"/>
        <end position="1723"/>
    </location>
</feature>
<feature type="helix" evidence="66">
    <location>
        <begin position="1726"/>
        <end position="1740"/>
    </location>
</feature>
<evidence type="ECO:0000255" key="1">
    <source>
        <dbReference type="PROSITE-ProRule" id="PRU00022"/>
    </source>
</evidence>
<evidence type="ECO:0000255" key="2">
    <source>
        <dbReference type="PROSITE-ProRule" id="PRU00295"/>
    </source>
</evidence>
<evidence type="ECO:0000269" key="3">
    <source>
    </source>
</evidence>
<evidence type="ECO:0000269" key="4">
    <source>
    </source>
</evidence>
<evidence type="ECO:0000269" key="5">
    <source>
    </source>
</evidence>
<evidence type="ECO:0000269" key="6">
    <source>
    </source>
</evidence>
<evidence type="ECO:0000269" key="7">
    <source>
    </source>
</evidence>
<evidence type="ECO:0000269" key="8">
    <source>
    </source>
</evidence>
<evidence type="ECO:0000269" key="9">
    <source>
    </source>
</evidence>
<evidence type="ECO:0000269" key="10">
    <source>
    </source>
</evidence>
<evidence type="ECO:0000269" key="11">
    <source>
    </source>
</evidence>
<evidence type="ECO:0000269" key="12">
    <source>
    </source>
</evidence>
<evidence type="ECO:0000269" key="13">
    <source>
    </source>
</evidence>
<evidence type="ECO:0000269" key="14">
    <source>
    </source>
</evidence>
<evidence type="ECO:0000269" key="15">
    <source>
    </source>
</evidence>
<evidence type="ECO:0000269" key="16">
    <source>
    </source>
</evidence>
<evidence type="ECO:0000269" key="17">
    <source>
    </source>
</evidence>
<evidence type="ECO:0000269" key="18">
    <source>
    </source>
</evidence>
<evidence type="ECO:0000269" key="19">
    <source>
    </source>
</evidence>
<evidence type="ECO:0000269" key="20">
    <source>
    </source>
</evidence>
<evidence type="ECO:0000269" key="21">
    <source>
    </source>
</evidence>
<evidence type="ECO:0000269" key="22">
    <source>
    </source>
</evidence>
<evidence type="ECO:0000269" key="23">
    <source>
    </source>
</evidence>
<evidence type="ECO:0000269" key="24">
    <source>
    </source>
</evidence>
<evidence type="ECO:0000269" key="25">
    <source>
    </source>
</evidence>
<evidence type="ECO:0000269" key="26">
    <source>
    </source>
</evidence>
<evidence type="ECO:0000269" key="27">
    <source>
    </source>
</evidence>
<evidence type="ECO:0000269" key="28">
    <source>
    </source>
</evidence>
<evidence type="ECO:0000269" key="29">
    <source>
    </source>
</evidence>
<evidence type="ECO:0000269" key="30">
    <source>
    </source>
</evidence>
<evidence type="ECO:0000269" key="31">
    <source>
    </source>
</evidence>
<evidence type="ECO:0000269" key="32">
    <source>
    </source>
</evidence>
<evidence type="ECO:0000269" key="33">
    <source>
    </source>
</evidence>
<evidence type="ECO:0000269" key="34">
    <source>
    </source>
</evidence>
<evidence type="ECO:0000269" key="35">
    <source>
    </source>
</evidence>
<evidence type="ECO:0000269" key="36">
    <source>
    </source>
</evidence>
<evidence type="ECO:0000269" key="37">
    <source>
    </source>
</evidence>
<evidence type="ECO:0000269" key="38">
    <source>
    </source>
</evidence>
<evidence type="ECO:0000269" key="39">
    <source>
    </source>
</evidence>
<evidence type="ECO:0000269" key="40">
    <source>
    </source>
</evidence>
<evidence type="ECO:0000269" key="41">
    <source>
    </source>
</evidence>
<evidence type="ECO:0000269" key="42">
    <source>
    </source>
</evidence>
<evidence type="ECO:0000269" key="43">
    <source>
    </source>
</evidence>
<evidence type="ECO:0000269" key="44">
    <source>
    </source>
</evidence>
<evidence type="ECO:0000269" key="45">
    <source>
    </source>
</evidence>
<evidence type="ECO:0000269" key="46">
    <source>
    </source>
</evidence>
<evidence type="ECO:0000269" key="47">
    <source>
    </source>
</evidence>
<evidence type="ECO:0000269" key="48">
    <source>
    </source>
</evidence>
<evidence type="ECO:0000269" key="49">
    <source ref="3"/>
</evidence>
<evidence type="ECO:0000269" key="50">
    <source ref="8"/>
</evidence>
<evidence type="ECO:0000303" key="51">
    <source>
    </source>
</evidence>
<evidence type="ECO:0000303" key="52">
    <source>
    </source>
</evidence>
<evidence type="ECO:0000303" key="53">
    <source>
    </source>
</evidence>
<evidence type="ECO:0000305" key="54"/>
<evidence type="ECO:0000305" key="55">
    <source>
    </source>
</evidence>
<evidence type="ECO:0000312" key="56">
    <source>
        <dbReference type="HGNC" id="HGNC:1323"/>
    </source>
</evidence>
<evidence type="ECO:0007744" key="57">
    <source>
        <dbReference type="PDB" id="1HZF"/>
    </source>
</evidence>
<evidence type="ECO:0007744" key="58">
    <source>
        <dbReference type="PDB" id="5JPM"/>
    </source>
</evidence>
<evidence type="ECO:0007744" key="59">
    <source>
        <dbReference type="PDB" id="5JPN"/>
    </source>
</evidence>
<evidence type="ECO:0007744" key="60">
    <source>
        <dbReference type="PDB" id="5JTW"/>
    </source>
</evidence>
<evidence type="ECO:0007744" key="61">
    <source>
        <dbReference type="PDB" id="6YSQ"/>
    </source>
</evidence>
<evidence type="ECO:0007744" key="62">
    <source>
        <dbReference type="PDB" id="7B2M"/>
    </source>
</evidence>
<evidence type="ECO:0007744" key="63">
    <source>
        <dbReference type="PDB" id="7B2P"/>
    </source>
</evidence>
<evidence type="ECO:0007744" key="64">
    <source>
        <dbReference type="PDB" id="7B2Q"/>
    </source>
</evidence>
<evidence type="ECO:0007829" key="65">
    <source>
        <dbReference type="PDB" id="1HZF"/>
    </source>
</evidence>
<evidence type="ECO:0007829" key="66">
    <source>
        <dbReference type="PDB" id="5JTW"/>
    </source>
</evidence>
<evidence type="ECO:0007829" key="67">
    <source>
        <dbReference type="PDB" id="6YSQ"/>
    </source>
</evidence>
<name>CO4A_HUMAN</name>
<gene>
    <name evidence="53 56" type="primary">C4A</name>
    <name type="synonym">CO4</name>
    <name type="synonym">CPAMD2</name>
</gene>
<keyword id="KW-0002">3D-structure</keyword>
<keyword id="KW-0025">Alternative splicing</keyword>
<keyword id="KW-0095">Blood group antigen</keyword>
<keyword id="KW-0966">Cell projection</keyword>
<keyword id="KW-0165">Cleavage on pair of basic residues</keyword>
<keyword id="KW-0180">Complement pathway</keyword>
<keyword id="KW-0903">Direct protein sequencing</keyword>
<keyword id="KW-0225">Disease variant</keyword>
<keyword id="KW-1015">Disulfide bond</keyword>
<keyword id="KW-0325">Glycoprotein</keyword>
<keyword id="KW-0391">Immunity</keyword>
<keyword id="KW-0395">Inflammatory response</keyword>
<keyword id="KW-0399">Innate immunity</keyword>
<keyword id="KW-0597">Phosphoprotein</keyword>
<keyword id="KW-1267">Proteomics identification</keyword>
<keyword id="KW-1185">Reference proteome</keyword>
<keyword id="KW-0964">Secreted</keyword>
<keyword id="KW-0732">Signal</keyword>
<keyword id="KW-0765">Sulfation</keyword>
<keyword id="KW-0770">Synapse</keyword>
<keyword id="KW-0772">Systemic lupus erythematosus</keyword>
<keyword id="KW-0882">Thioester bond</keyword>
<sequence>MRLLWGLIWASSFFTLSLQKPRLLLFSPSVVHLGVPLSVGVQLQDVPRGQVVKGSVFLRNPSRNNVPCSPKVDFTLSSERDFALLSLQVPLKDAKSCGLHQLLRGPEVQLVAHSPWLKDSLSRTTNIQGINLLFSSRRGHLFLQTDQPIYNPGQRVRYRVFALDQKMRPSTDTITVMVENSHGLRVRKKEVYMPSSIFQDDFVIPDISEPGTWKISARFSDGLESNSSTQFEVKKYVLPNFEVKITPGKPYILTVPGHLDEMQLDIQARYIYGKPVQGVAYVRFGLLDEDGKKTFFRGLESQTKLVNGQSHISLSKAEFQDALEKLNMGITDLQGLRLYVAAAIIESPGGEMEEAELTSWYFVSSPFSLDLSKTKRHLVPGAPFLLQALVREMSGSPASGIPVKVSATVSSPGSVPEVQDIQQNTDGSGQVSIPIIIPQTISELQLSVSAGSPHPAIARLTVAAPPSGGPGFLSIERPDSRPPRVGDTLNLNLRAVGSGATFSHYYYMILSRGQIVFMNREPKRTLTSVSVFVDHHLAPSFYFVAFYYHGDHPVANSLRVDVQAGACEGKLELSVDGAKQYRNGESVKLHLETDSLALVALGALDTALYAAGSKSHKPLNMGKVFEAMNSYDLGCGPGGGDSALQVFQAAGLAFSDGDQWTLSRKRLSCPKEKTTRKKRNVNFQKAINEKLGQYASPTAKRCCQDGVTRLPMMRSCEQRAARVQQPDCREPFLSCCQFAESLRKKSRDKGQAGLQRALEILQEEDLIDEDDIPVRSFFPENWLWRVETVDRFQILTLWLPDSLTTWEIHGLSLSKTKGLCVATPVQLRVFREFHLHLRLPMSVRRFEQLELRPVLYNYLDKNLTVSVHVSPVEGLCLAGGGGLAQQVLVPAGSARPVAFSVVPTAAAAVSLKVVARGSFEFPVGDAVSKVLQIEKEGAIHREELVYELNPLDHRGRTLEIPGNSDPNMIPDGDFNSYVRVTASDPLDTLGSEGALSPGGVASLLRLPRGCGEQTMIYLAPTLAASRYLDKTEQWSTLPPETKDHAVDLIQKGYMRIQQFRKADGSYAAWLSRDSSTWLTAFVLKVLSLAQEQVGGSPEKLQETSNWLLSQQQADGSFQDPCPVLDRSMQGGLVGNDETVALTAFVTIALHHGLAVFQDEGAEPLKQRVEASISKANSFLGEKASAGLLGAHAAAITAYALTLTKAPVDLLGVAHNNLMAMAQETGDNLYWGSVTGSQSNAVSPTPAPRNPSDPMPQAPALWIETTAYALLHLLLHEGKAEMADQASAWLTRQGSFQGGFRSTQDTVIALDALSAYWIASHTTEERGLNVTLSSTGRNGFKSHALQLNNRQIRGLEEELQFSLGSKINVKVGGNSKGTLKVLRTYNVLDMKNTTCQDLQIEVTVKGHVEYTMEANEDYEDYEYDELPAKDDPDAPLQPVTPLQLFEGRRNRRRREAPKVVEEQESRVHYTVCIWRNGKVGLSGMAIADVTLLSGFHALRADLEKLTSLSDRYVSHFETEGPHVLLYFDSVPTSRECVGFEAVQEVPVGLVQPASATLYDYYNPERRCSVFYGAPSKSRLLATLCSAEVCQCAEGKCPRQRRALERGLQDEDGYRMKFACYYPRVEYGFQVKVLREDSRAAFRLFETKITQVLHFTKDVKAAANQMRNFLVRASCRLRLEPGKEYLIMGLDGATYDLEGHPQYLLDSNSWIEEMPSERLCRSTRQRAACAQLNDFLQEYGTQGCQV</sequence>
<protein>
    <recommendedName>
        <fullName>Complement C4-A</fullName>
    </recommendedName>
    <alternativeName>
        <fullName>Acidic complement C4</fullName>
    </alternativeName>
    <alternativeName>
        <fullName>C3 and PZP-like alpha-2-macroglobulin domain-containing protein 2</fullName>
    </alternativeName>
    <component>
        <recommendedName>
            <fullName>Complement C4 beta chain</fullName>
        </recommendedName>
    </component>
    <component>
        <recommendedName>
            <fullName>Complement C4-A alpha chain</fullName>
        </recommendedName>
    </component>
    <component>
        <recommendedName>
            <fullName>C4a anaphylatoxin</fullName>
        </recommendedName>
    </component>
    <component>
        <recommendedName>
            <fullName>Complement C4b-A</fullName>
        </recommendedName>
        <alternativeName>
            <fullName>Complement C4b-alpha' chain</fullName>
        </alternativeName>
    </component>
    <component>
        <recommendedName>
            <fullName>Complement C4d-A</fullName>
        </recommendedName>
    </component>
    <component>
        <recommendedName>
            <fullName>Complement C4 gamma chain</fullName>
        </recommendedName>
    </component>
</protein>
<reference key="1">
    <citation type="journal article" date="1984" name="Cell">
        <title>The structural basis of the multiple forms of human complement component C4.</title>
        <authorList>
            <person name="Belt K.T."/>
            <person name="Carroll M.C."/>
            <person name="Porter R.R."/>
        </authorList>
    </citation>
    <scope>NUCLEOTIDE SEQUENCE [MRNA] (ISOFORM 1)</scope>
    <scope>VARIANTS ALA-418 AND SER-1201</scope>
    <source>
        <tissue>Liver</tissue>
    </source>
</reference>
<reference key="2">
    <citation type="journal article" date="1991" name="J. Immunol.">
        <title>The complete exon-intron structure of a human complement component C4A gene. DNA sequences, polymorphism, and linkage to the 21-hydroxylase gene.</title>
        <authorList>
            <person name="Yu C.Y."/>
        </authorList>
    </citation>
    <scope>NUCLEOTIDE SEQUENCE [GENOMIC DNA]</scope>
    <scope>VARIANTS TYR-347; LEU-726 AND ALA-1286</scope>
</reference>
<reference key="3">
    <citation type="submission" date="2005-03" db="EMBL/GenBank/DDBJ databases">
        <title>Preparation of a set of expression-ready clones of mammalian long cDNAs encoding large proteins by the ORF trap cloning method.</title>
        <authorList>
            <person name="Nakajima D."/>
            <person name="Saito K."/>
            <person name="Yamakawa H."/>
            <person name="Kikuno R.F."/>
            <person name="Nakayama M."/>
            <person name="Ohara R."/>
            <person name="Okazaki N."/>
            <person name="Koga H."/>
            <person name="Nagase T."/>
            <person name="Ohara O."/>
        </authorList>
    </citation>
    <scope>NUCLEOTIDE SEQUENCE [LARGE SCALE MRNA] (ISOFORM 1)</scope>
    <scope>VARIANTS SER-1176 AND ALA-1286</scope>
    <source>
        <tissue>Brain</tissue>
    </source>
</reference>
<reference key="4">
    <citation type="journal article" date="2003" name="Nature">
        <title>The DNA sequence and analysis of human chromosome 6.</title>
        <authorList>
            <person name="Mungall A.J."/>
            <person name="Palmer S.A."/>
            <person name="Sims S.K."/>
            <person name="Edwards C.A."/>
            <person name="Ashurst J.L."/>
            <person name="Wilming L."/>
            <person name="Jones M.C."/>
            <person name="Horton R."/>
            <person name="Hunt S.E."/>
            <person name="Scott C.E."/>
            <person name="Gilbert J.G.R."/>
            <person name="Clamp M.E."/>
            <person name="Bethel G."/>
            <person name="Milne S."/>
            <person name="Ainscough R."/>
            <person name="Almeida J.P."/>
            <person name="Ambrose K.D."/>
            <person name="Andrews T.D."/>
            <person name="Ashwell R.I.S."/>
            <person name="Babbage A.K."/>
            <person name="Bagguley C.L."/>
            <person name="Bailey J."/>
            <person name="Banerjee R."/>
            <person name="Barker D.J."/>
            <person name="Barlow K.F."/>
            <person name="Bates K."/>
            <person name="Beare D.M."/>
            <person name="Beasley H."/>
            <person name="Beasley O."/>
            <person name="Bird C.P."/>
            <person name="Blakey S.E."/>
            <person name="Bray-Allen S."/>
            <person name="Brook J."/>
            <person name="Brown A.J."/>
            <person name="Brown J.Y."/>
            <person name="Burford D.C."/>
            <person name="Burrill W."/>
            <person name="Burton J."/>
            <person name="Carder C."/>
            <person name="Carter N.P."/>
            <person name="Chapman J.C."/>
            <person name="Clark S.Y."/>
            <person name="Clark G."/>
            <person name="Clee C.M."/>
            <person name="Clegg S."/>
            <person name="Cobley V."/>
            <person name="Collier R.E."/>
            <person name="Collins J.E."/>
            <person name="Colman L.K."/>
            <person name="Corby N.R."/>
            <person name="Coville G.J."/>
            <person name="Culley K.M."/>
            <person name="Dhami P."/>
            <person name="Davies J."/>
            <person name="Dunn M."/>
            <person name="Earthrowl M.E."/>
            <person name="Ellington A.E."/>
            <person name="Evans K.A."/>
            <person name="Faulkner L."/>
            <person name="Francis M.D."/>
            <person name="Frankish A."/>
            <person name="Frankland J."/>
            <person name="French L."/>
            <person name="Garner P."/>
            <person name="Garnett J."/>
            <person name="Ghori M.J."/>
            <person name="Gilby L.M."/>
            <person name="Gillson C.J."/>
            <person name="Glithero R.J."/>
            <person name="Grafham D.V."/>
            <person name="Grant M."/>
            <person name="Gribble S."/>
            <person name="Griffiths C."/>
            <person name="Griffiths M.N.D."/>
            <person name="Hall R."/>
            <person name="Halls K.S."/>
            <person name="Hammond S."/>
            <person name="Harley J.L."/>
            <person name="Hart E.A."/>
            <person name="Heath P.D."/>
            <person name="Heathcott R."/>
            <person name="Holmes S.J."/>
            <person name="Howden P.J."/>
            <person name="Howe K.L."/>
            <person name="Howell G.R."/>
            <person name="Huckle E."/>
            <person name="Humphray S.J."/>
            <person name="Humphries M.D."/>
            <person name="Hunt A.R."/>
            <person name="Johnson C.M."/>
            <person name="Joy A.A."/>
            <person name="Kay M."/>
            <person name="Keenan S.J."/>
            <person name="Kimberley A.M."/>
            <person name="King A."/>
            <person name="Laird G.K."/>
            <person name="Langford C."/>
            <person name="Lawlor S."/>
            <person name="Leongamornlert D.A."/>
            <person name="Leversha M."/>
            <person name="Lloyd C.R."/>
            <person name="Lloyd D.M."/>
            <person name="Loveland J.E."/>
            <person name="Lovell J."/>
            <person name="Martin S."/>
            <person name="Mashreghi-Mohammadi M."/>
            <person name="Maslen G.L."/>
            <person name="Matthews L."/>
            <person name="McCann O.T."/>
            <person name="McLaren S.J."/>
            <person name="McLay K."/>
            <person name="McMurray A."/>
            <person name="Moore M.J.F."/>
            <person name="Mullikin J.C."/>
            <person name="Niblett D."/>
            <person name="Nickerson T."/>
            <person name="Novik K.L."/>
            <person name="Oliver K."/>
            <person name="Overton-Larty E.K."/>
            <person name="Parker A."/>
            <person name="Patel R."/>
            <person name="Pearce A.V."/>
            <person name="Peck A.I."/>
            <person name="Phillimore B.J.C.T."/>
            <person name="Phillips S."/>
            <person name="Plumb R.W."/>
            <person name="Porter K.M."/>
            <person name="Ramsey Y."/>
            <person name="Ranby S.A."/>
            <person name="Rice C.M."/>
            <person name="Ross M.T."/>
            <person name="Searle S.M."/>
            <person name="Sehra H.K."/>
            <person name="Sheridan E."/>
            <person name="Skuce C.D."/>
            <person name="Smith S."/>
            <person name="Smith M."/>
            <person name="Spraggon L."/>
            <person name="Squares S.L."/>
            <person name="Steward C.A."/>
            <person name="Sycamore N."/>
            <person name="Tamlyn-Hall G."/>
            <person name="Tester J."/>
            <person name="Theaker A.J."/>
            <person name="Thomas D.W."/>
            <person name="Thorpe A."/>
            <person name="Tracey A."/>
            <person name="Tromans A."/>
            <person name="Tubby B."/>
            <person name="Wall M."/>
            <person name="Wallis J.M."/>
            <person name="West A.P."/>
            <person name="White S.S."/>
            <person name="Whitehead S.L."/>
            <person name="Whittaker H."/>
            <person name="Wild A."/>
            <person name="Willey D.J."/>
            <person name="Wilmer T.E."/>
            <person name="Wood J.M."/>
            <person name="Wray P.W."/>
            <person name="Wyatt J.C."/>
            <person name="Young L."/>
            <person name="Younger R.M."/>
            <person name="Bentley D.R."/>
            <person name="Coulson A."/>
            <person name="Durbin R.M."/>
            <person name="Hubbard T."/>
            <person name="Sulston J.E."/>
            <person name="Dunham I."/>
            <person name="Rogers J."/>
            <person name="Beck S."/>
        </authorList>
    </citation>
    <scope>NUCLEOTIDE SEQUENCE [LARGE SCALE GENOMIC DNA]</scope>
    <scope>VARIANTS TYR-347; SER-1176 AND ALA-1286</scope>
</reference>
<reference key="5">
    <citation type="journal article" date="2004" name="Genome Res.">
        <title>The status, quality, and expansion of the NIH full-length cDNA project: the Mammalian Gene Collection (MGC).</title>
        <authorList>
            <consortium name="The MGC Project Team"/>
        </authorList>
    </citation>
    <scope>NUCLEOTIDE SEQUENCE [LARGE SCALE MRNA] (ISOFORMS 1 AND 2)</scope>
    <scope>VARIANTS TYR-347; GLY-1073 AND ALA-1286</scope>
    <source>
        <tissue>Brain</tissue>
    </source>
</reference>
<reference key="6">
    <citation type="journal article" date="1985" name="Immunogenetics">
        <title>Polymorphism of human complement component C4.</title>
        <authorList>
            <person name="Belt K.T."/>
            <person name="Yu C.Y."/>
            <person name="Carroll M.C."/>
            <person name="Porter R.R."/>
        </authorList>
    </citation>
    <scope>NUCLEOTIDE SEQUENCE [GENOMIC DNA] OF 1-22 AND 1056-1225</scope>
</reference>
<reference key="7">
    <citation type="journal article" date="1994" name="Hum. Mol. Genet.">
        <title>Characterisation of the novel gene G11 lying adjacent to the complement C4A gene in the human major histocompatibility complex.</title>
        <authorList>
            <person name="Sargent C.A."/>
            <person name="Anderson M.J."/>
            <person name="Hsieh S.-L."/>
            <person name="Kendall E."/>
            <person name="Gomez-Escobar N."/>
            <person name="Campbell R.D."/>
        </authorList>
    </citation>
    <scope>NUCLEOTIDE SEQUENCE [GENOMIC DNA] OF 1-21</scope>
    <scope>VARIANT ASN-727</scope>
</reference>
<reference key="8">
    <citation type="submission" date="2003-09" db="EMBL/GenBank/DDBJ databases">
        <title>Molecular genetics of complement C4: implications for MHC evolution and disease susceptibility gene mapping.</title>
        <authorList>
            <person name="Sayer D."/>
            <person name="Puschendorf M."/>
            <person name="Wetherall J."/>
        </authorList>
    </citation>
    <scope>NUCLEOTIDE SEQUENCE [GENOMIC DNA] OF 448-570 AND 692-1225</scope>
    <scope>VARIANTS TRP-477; PRO-549; THR-907; GLY-1073; SER-1176; ALA-1207 AND ARG-1210</scope>
</reference>
<reference key="9">
    <citation type="journal article" date="1981" name="J. Biol. Chem.">
        <title>Complete primary structure of human C4a anaphylatoxin.</title>
        <authorList>
            <person name="Moon K.E."/>
            <person name="Gorski J.P."/>
            <person name="Hugli T.E."/>
        </authorList>
    </citation>
    <scope>PROTEIN SEQUENCE OF 680-756</scope>
    <scope>SUBCELLULAR LOCATION (C4A ANAPHYLATOXIN)</scope>
</reference>
<reference key="10">
    <citation type="journal article" date="1990" name="FEBS Lett.">
        <title>Importance of the alpha 3-fragment of complement C4 for the binding with C4b-binding protein.</title>
        <authorList>
            <person name="Hessing M."/>
            <person name="van 't Veer C."/>
            <person name="Hackeng T.M."/>
            <person name="Bouma B.N."/>
            <person name="Iwanaga S."/>
        </authorList>
    </citation>
    <scope>PROTEIN SEQUENCE OF 757-771 AND 980-990</scope>
</reference>
<reference key="11">
    <citation type="journal article" date="1981" name="Biochem. J.">
        <title>Amino acid sequence around the thiol and reactive acyl groups of human complement component C4.</title>
        <authorList>
            <person name="Campbell R.D."/>
            <person name="Gagnon J."/>
            <person name="Porter R.R."/>
        </authorList>
    </citation>
    <scope>PROTEIN SEQUENCE OF 957-1044</scope>
</reference>
<reference key="12">
    <citation type="journal article" date="1987" name="Mol. Immunol.">
        <title>The chemical structure of the C4d fragment of the human complement component C4.</title>
        <authorList>
            <person name="Chakravarti D.N."/>
            <person name="Campbell R.D."/>
            <person name="Porter R.R."/>
        </authorList>
    </citation>
    <scope>PROTEIN SEQUENCE OF 957-1336</scope>
    <scope>PROTEOLYTIC CLEAVAGE</scope>
    <scope>VARIANTS GLY-1073; SER-1176; ALA-1207; ARG-1210 AND ALA-1286</scope>
</reference>
<reference key="13">
    <citation type="journal article" date="1981" name="Proc. Natl. Acad. Sci. U.S.A.">
        <title>Sequence determination of the thiolester site of the fourth component of human complement.</title>
        <authorList>
            <person name="Harrison R.A."/>
            <person name="Thomas M.L."/>
            <person name="Tack B.F."/>
        </authorList>
    </citation>
    <scope>PROTEIN SEQUENCE OF 990-1037</scope>
</reference>
<reference key="14">
    <citation type="journal article" date="1998" name="J. Immunol.">
        <title>C4d DNA sequences of two infrequent human allotypes (C4A13 and C4B12) and the presence of signal sequences enhancing recombination.</title>
        <authorList>
            <person name="Martinez-Quiles N."/>
            <person name="Paz-Artal E."/>
            <person name="Moreno-Pelayo M.A."/>
            <person name="Longas J."/>
            <person name="Ferre-Lopez S."/>
            <person name="Rosal M."/>
            <person name="Arnaiz-Villena A."/>
        </authorList>
    </citation>
    <scope>NUCLEOTIDE SEQUENCE [GENOMIC DNA] OF 1055-1225 (ALLOTYPE C4A13)</scope>
</reference>
<reference key="15">
    <citation type="journal article" date="1983" name="Proc. Natl. Acad. Sci. U.S.A.">
        <title>Cloning of a human complement component C4 gene.</title>
        <authorList>
            <person name="Carroll M.C."/>
            <person name="Porter R.R."/>
        </authorList>
    </citation>
    <scope>NUCLEOTIDE SEQUENCE [MRNA] OF 1195-1294</scope>
</reference>
<reference key="16">
    <citation type="journal article" date="1983" name="FEBS Lett.">
        <title>Amino acid sequence of a polymorphic segment from fragment C4d of human complement component C4.</title>
        <authorList>
            <person name="Chakravarti D.N."/>
            <person name="Campbell R.D."/>
            <person name="Gagnon J."/>
        </authorList>
    </citation>
    <scope>PROTEIN SEQUENCE OF 1199-1304</scope>
    <scope>VARIANTS ALA-1207; ARG-1210 AND ALA-1286</scope>
</reference>
<reference key="17">
    <citation type="journal article" date="1986" name="J. Biol. Chem.">
        <title>Identification of the site of sulfation of the fourth component of human complement.</title>
        <authorList>
            <person name="Hortin G."/>
            <person name="Sims H."/>
            <person name="Strauss A.W."/>
        </authorList>
    </citation>
    <scope>PROTEIN SEQUENCE OF 1405-1431</scope>
    <scope>SULFATION AT TYR-1417; TYR-1420 AND TYR-1422</scope>
</reference>
<reference key="18">
    <citation type="journal article" date="1983" name="Proc. Natl. Acad. Sci. U.S.A.">
        <title>Use of a cDNA clone for the fourth component of human complement (C4) for analysis of a genetic deficiency of C4 in guinea pig.</title>
        <authorList>
            <person name="Whitehead A.S."/>
            <person name="Goldberger G."/>
            <person name="Woods D.E."/>
            <person name="Markham A.F."/>
            <person name="Colten H.R."/>
        </authorList>
    </citation>
    <scope>NUCLEOTIDE SEQUENCE [MRNA] OF 1448-1474</scope>
</reference>
<reference key="19">
    <citation type="journal article" date="1974" name="J. Exp. Med.">
        <title>Fourth component of human complement: description of a three polypeptide chain structure.</title>
        <authorList>
            <person name="Schreiber R.D."/>
            <person name="Mueller-Eberhard H.J."/>
        </authorList>
    </citation>
    <scope>SUBUNIT</scope>
</reference>
<reference key="20">
    <citation type="journal article" date="1978" name="Nature">
        <title>A single chain precursor of C4 in human serum.</title>
        <authorList>
            <person name="Gigli I."/>
        </authorList>
    </citation>
    <scope>PROTEOLYTIC CLEAVAGE</scope>
</reference>
<reference key="21">
    <citation type="journal article" date="1979" name="FEBS Lett.">
        <title>Purification of human complement subcomponent C4. C4 cleavage by C1s.</title>
        <authorList>
            <person name="Reboul A."/>
            <person name="Thielens N."/>
            <person name="Villiers M.B."/>
            <person name="Colomb M.G."/>
        </authorList>
    </citation>
    <scope>PROTEOLYTIC CLEAVAGE</scope>
</reference>
<reference key="22">
    <citation type="journal article" date="1980" name="Biochem. J.">
        <title>The human complement system: assembly of the classical pathway C3 convertase.</title>
        <authorList>
            <person name="Kerr M.A."/>
        </authorList>
    </citation>
    <scope>FUNCTION (COMPLEMENT C4B-A)</scope>
    <scope>SUBUNIT (COMPLEMENT C4B-A)</scope>
</reference>
<reference key="23">
    <citation type="journal article" date="1985" name="J. Biochem.">
        <title>Purification and characterization of the C3 convertase of the classical pathway of human complement system by size exclusion high-performance liquid chromatography.</title>
        <authorList>
            <person name="Nagasawa S."/>
            <person name="Kobayashi C."/>
            <person name="Maki-Suzuki T."/>
            <person name="Yamashita N."/>
            <person name="Koyama J."/>
        </authorList>
    </citation>
    <scope>SUBUNIT</scope>
</reference>
<reference key="24">
    <citation type="journal article" date="1984" name="FEBS Lett.">
        <title>Comparative study of the fluid-phase proteolytic cleavage of human complement subcomponents C4 and C2 by C1s and C1r2-C1s2.</title>
        <authorList>
            <person name="Thielens N.M."/>
            <person name="Villiers C.L."/>
            <person name="Villiers M.B."/>
            <person name="Colomb M.G."/>
        </authorList>
    </citation>
    <scope>PROTEOLYTIC CLEAVAGE</scope>
</reference>
<reference key="25">
    <citation type="journal article" date="1990" name="J. Biol. Chem.">
        <title>Localization of the covalent C3b-binding site on C4b within the complement classical pathway C5 convertase, C4b2a3b.</title>
        <authorList>
            <person name="Kozono H."/>
            <person name="Kinoshita T."/>
            <person name="Kim Y.U."/>
            <person name="Takata-Kozono Y."/>
            <person name="Tsunasawa S."/>
            <person name="Sakiyama F."/>
            <person name="Takeda J."/>
            <person name="Hong K."/>
            <person name="Inoue K."/>
        </authorList>
    </citation>
    <scope>FUNCTION (COMPLEMENT C4B-A)</scope>
    <scope>SUBUNIT (COMPLEMENT C4B-A)</scope>
    <scope>PTM (COMPLEMENT C4B-A)</scope>
</reference>
<reference key="26">
    <citation type="journal article" date="1990" name="Proc. Natl. Acad. Sci. U.S.A.">
        <title>Substitution of a single amino acid (aspartic acid for histidine) converts the functional activity of human complement C4B to C4A.</title>
        <authorList>
            <person name="Carroll M.C."/>
            <person name="Fathallah D.M."/>
            <person name="Bergamaschini L."/>
            <person name="Alicot E.M."/>
            <person name="Isenman D.E."/>
        </authorList>
    </citation>
    <scope>FUNCTION</scope>
</reference>
<reference key="27">
    <citation type="journal article" date="1992" name="J. Biol. Chem.">
        <title>Covalent binding of C3b to C4b within the classical complement pathway C5 convertase. Determination of amino acid residues involved in ester linkage formation.</title>
        <authorList>
            <person name="Kim Y.U."/>
            <person name="Carroll M.C."/>
            <person name="Isenman D.E."/>
            <person name="Nonaka M."/>
            <person name="Pramoonjago P."/>
            <person name="Takeda J."/>
            <person name="Inoue K."/>
            <person name="Kinoshita T."/>
        </authorList>
    </citation>
    <scope>SUBUNIT (COMPLEMENT C4B-A)</scope>
    <scope>PTM (COMPLEMENT C4B-A)</scope>
</reference>
<reference key="28">
    <citation type="journal article" date="1993" name="J. Clin. Invest.">
        <title>Genetic basis of human complement C4A deficiency. Detection of a point mutation leading to nonexpression.</title>
        <authorList>
            <person name="Barba G."/>
            <person name="Rittner C."/>
            <person name="Schneider P.M."/>
        </authorList>
    </citation>
    <scope>INVOLVEMENT IN C4AD</scope>
</reference>
<reference key="29">
    <citation type="journal article" date="1996" name="Nature">
        <title>The reaction mechanism of the internal thioester in the human complement component C4.</title>
        <authorList>
            <person name="Dodds A.W."/>
            <person name="Ren X.D."/>
            <person name="Willis A.C."/>
            <person name="Law S.K."/>
        </authorList>
    </citation>
    <scope>FUNCTION (COMPLEMENT C4B-A)</scope>
    <scope>SUBCELLULAR LOCATION (COMPLEMENT C4B-A)</scope>
</reference>
<reference key="30">
    <citation type="journal article" date="1998" name="J. Biol. Chem.">
        <title>Baculovirus-mediated expression of truncated modular fragments from the catalytic region of human complement serine protease C1s. Evidence for the involvement of both complement control protein modules in the recognition of the C4 protein substrate.</title>
        <authorList>
            <person name="Rossi V."/>
            <person name="Bally I."/>
            <person name="Thielens N.M."/>
            <person name="Esser A.F."/>
            <person name="Arlaud G.J."/>
        </authorList>
    </citation>
    <scope>PROTEOLYTIC CLEAVAGE</scope>
</reference>
<reference key="31">
    <citation type="journal article" date="1999" name="J. Immunol.">
        <title>Deficiency of human complement protein C4 due to identical frameshift mutations in the C4A and C4B genes.</title>
        <authorList>
            <person name="Lokki M.L."/>
            <person name="Circolo A."/>
            <person name="Ahokas P."/>
            <person name="Rupert K.L."/>
            <person name="Yu C.Y."/>
            <person name="Colten H.R."/>
        </authorList>
    </citation>
    <scope>INVOLVEMENT IN SLE</scope>
</reference>
<reference key="32">
    <citation type="journal article" date="2001" name="Int. Immunopharmacol.">
        <title>Genetic, structural and functional diversities of human complement components C4A and C4B and their mouse homologues, Slp and C4.</title>
        <authorList>
            <person name="Blanchong C.A."/>
            <person name="Chung E.K."/>
            <person name="Rupert K.L."/>
            <person name="Yang Y."/>
            <person name="Yang Z."/>
            <person name="Zhou B."/>
            <person name="Moulds J.M."/>
            <person name="Yu C.Y."/>
        </authorList>
    </citation>
    <scope>REVIEW</scope>
    <scope>DESCRIPTION OF ALLOTYPES</scope>
    <scope>TISSUE SPECIFICITY</scope>
</reference>
<reference key="33">
    <citation type="journal article" date="2001" name="J. Biol. Chem.">
        <title>Substrate specificities of recombinant mannan-binding lectin-associated serine proteases-1 and -2.</title>
        <authorList>
            <person name="Rossi V."/>
            <person name="Cseh S."/>
            <person name="Bally I."/>
            <person name="Thielens N.M."/>
            <person name="Jensenius J.C."/>
            <person name="Arlaud G.J."/>
        </authorList>
    </citation>
    <scope>PROTEOLYTIC CLEAVAGE</scope>
</reference>
<reference key="34">
    <citation type="journal article" date="2003" name="J. Biol. Chem.">
        <title>Formation of high affinity C5 convertase of the classical pathway of complement.</title>
        <authorList>
            <person name="Rawal N."/>
            <person name="Pangburn M.K."/>
        </authorList>
    </citation>
    <scope>FUNCTION (COMPLEMENT C4B-A)</scope>
    <scope>SUBUNIT (COMPLEMENT C4B-A)</scope>
</reference>
<reference key="35">
    <citation type="journal article" date="2003" name="Nat. Biotechnol.">
        <title>Identification and quantification of N-linked glycoproteins using hydrazide chemistry, stable isotope labeling and mass spectrometry.</title>
        <authorList>
            <person name="Zhang H."/>
            <person name="Li X.-J."/>
            <person name="Martin D.B."/>
            <person name="Aebersold R."/>
        </authorList>
    </citation>
    <scope>GLYCOSYLATION AT ASN-226</scope>
</reference>
<reference key="36">
    <citation type="journal article" date="2004" name="Proteomics">
        <title>Screening for N-glycosylated proteins by liquid chromatography mass spectrometry.</title>
        <authorList>
            <person name="Bunkenborg J."/>
            <person name="Pilch B.J."/>
            <person name="Podtelejnikov A.V."/>
            <person name="Wisniewski J.R."/>
        </authorList>
    </citation>
    <scope>GLYCOSYLATION [LARGE SCALE ANALYSIS] AT ASN-1391</scope>
    <source>
        <tissue>Plasma</tissue>
    </source>
</reference>
<reference key="37">
    <citation type="journal article" date="2005" name="J. Biol. Chem.">
        <title>Elucidation of the substrate specificity of the C1s protease of the classical complement pathway.</title>
        <authorList>
            <person name="Kerr F.K."/>
            <person name="O'Brien G."/>
            <person name="Quinsey N.S."/>
            <person name="Whisstock J.C."/>
            <person name="Boyd S."/>
            <person name="de la Banda M.G."/>
            <person name="Kaiserman D."/>
            <person name="Matthews A.Y."/>
            <person name="Bird P.I."/>
            <person name="Pike R.N."/>
        </authorList>
    </citation>
    <scope>PROTEOLYTIC CLEAVAGE</scope>
</reference>
<reference key="38">
    <citation type="journal article" date="1986" name="EMBO J.">
        <title>Structural basis of the polymorphism of human complement components C4A and C4B: gene size, reactivity and antigenicity.</title>
        <authorList>
            <person name="Yu C.Y."/>
            <person name="Belt K.T."/>
            <person name="Giles C.M."/>
            <person name="Campbell R.D."/>
            <person name="Porter R.R."/>
        </authorList>
    </citation>
    <scope>STRUCTURAL BASIS OF POLYMORPHISM</scope>
</reference>
<reference key="39">
    <citation type="journal article" date="2005" name="J. Proteome Res.">
        <title>Human plasma N-glycoproteome analysis by immunoaffinity subtraction, hydrazide chemistry, and mass spectrometry.</title>
        <authorList>
            <person name="Liu T."/>
            <person name="Qian W.-J."/>
            <person name="Gritsenko M.A."/>
            <person name="Camp D.G. II"/>
            <person name="Monroe M.E."/>
            <person name="Moore R.J."/>
            <person name="Smith R.D."/>
        </authorList>
    </citation>
    <scope>GLYCOSYLATION [LARGE SCALE ANALYSIS] AT ASN-862; ASN-1328 AND ASN-1391</scope>
    <source>
        <tissue>Plasma</tissue>
    </source>
</reference>
<reference key="40">
    <citation type="journal article" date="2007" name="Am. J. Hum. Genet.">
        <title>Gene copy-number variation and associated polymorphisms of complement component C4 in human systemic lupus erythematosus (SLE): low copy number is a risk factor for and high copy number is a protective factor against SLE susceptibility in European Americans.</title>
        <authorList>
            <person name="Yang Y."/>
            <person name="Chung E.K."/>
            <person name="Wu Y.L."/>
            <person name="Savelli S.L."/>
            <person name="Nagaraja H.N."/>
            <person name="Zhou B."/>
            <person name="Hebert M."/>
            <person name="Jones K.N."/>
            <person name="Shu Y."/>
            <person name="Kitzmiller K."/>
            <person name="Blanchong C.A."/>
            <person name="McBride K.L."/>
            <person name="Higgins G.C."/>
            <person name="Rennebohm R.M."/>
            <person name="Rice R.R."/>
            <person name="Hackshaw K.V."/>
            <person name="Roubey R.A."/>
            <person name="Grossman J.M."/>
            <person name="Tsao B.P."/>
            <person name="Birmingham D.J."/>
            <person name="Rovin B.H."/>
            <person name="Hebert L.A."/>
            <person name="Yu C.Y."/>
        </authorList>
    </citation>
    <scope>INVOLVEMENT IN SLE</scope>
</reference>
<reference key="41">
    <citation type="journal article" date="2008" name="J. Biol. Chem.">
        <title>Activation of complement component C5: comparison of C5 convertases of the lectin pathway and the classical pathway of complement.</title>
        <authorList>
            <person name="Rawal N."/>
            <person name="Rajagopalan R."/>
            <person name="Salvi V.P."/>
        </authorList>
    </citation>
    <scope>FUNCTION (COMPLEMENT C4B-A)</scope>
    <scope>SUBUNIT (COMPLEMENT C4B-A)</scope>
</reference>
<reference key="42">
    <citation type="journal article" date="2008" name="Proteomics">
        <title>Identification of N-linked glycoproteins in human milk by hydrophilic interaction liquid chromatography and mass spectrometry.</title>
        <authorList>
            <person name="Picariello G."/>
            <person name="Ferranti P."/>
            <person name="Mamone G."/>
            <person name="Roepstorff P."/>
            <person name="Addeo F."/>
        </authorList>
    </citation>
    <scope>GLYCOSYLATION [LARGE SCALE ANALYSIS] AT ASN-226 AND ASN-1328</scope>
    <source>
        <tissue>Milk</tissue>
    </source>
</reference>
<reference key="43">
    <citation type="journal article" date="2009" name="J. Proteome Res.">
        <title>Glycoproteomics analysis of human liver tissue by combination of multiple enzyme digestion and hydrazide chemistry.</title>
        <authorList>
            <person name="Chen R."/>
            <person name="Jiang X."/>
            <person name="Sun D."/>
            <person name="Han G."/>
            <person name="Wang F."/>
            <person name="Ye M."/>
            <person name="Wang L."/>
            <person name="Zou H."/>
        </authorList>
    </citation>
    <scope>GLYCOSYLATION [LARGE SCALE ANALYSIS] AT ASN-226; ASN-1328 AND ASN-1391</scope>
    <source>
        <tissue>Liver</tissue>
    </source>
</reference>
<reference key="44">
    <citation type="journal article" date="2009" name="Mol. Cell. Proteomics">
        <title>A strategy for precise and large scale identification of core fucosylated glycoproteins.</title>
        <authorList>
            <person name="Jia W."/>
            <person name="Lu Z."/>
            <person name="Fu Y."/>
            <person name="Wang H.P."/>
            <person name="Wang L.H."/>
            <person name="Chi H."/>
            <person name="Yuan Z.F."/>
            <person name="Zheng Z.B."/>
            <person name="Song L.N."/>
            <person name="Han H.H."/>
            <person name="Liang Y.M."/>
            <person name="Wang J.L."/>
            <person name="Cai Y."/>
            <person name="Zhang Y.K."/>
            <person name="Deng Y.L."/>
            <person name="Ying W.T."/>
            <person name="He S.M."/>
            <person name="Qian X.H."/>
        </authorList>
    </citation>
    <scope>GLYCOSYLATION AT ASN-1328</scope>
</reference>
<reference key="45">
    <citation type="journal article" date="2009" name="Nat. Methods">
        <title>Enrichment of glycopeptides for glycan structure and attachment site identification.</title>
        <authorList>
            <person name="Nilsson J."/>
            <person name="Rueetschi U."/>
            <person name="Halim A."/>
            <person name="Hesse C."/>
            <person name="Carlsohn E."/>
            <person name="Brinkmalm G."/>
            <person name="Larson G."/>
        </authorList>
    </citation>
    <scope>GLYCOSYLATION [LARGE SCALE ANALYSIS]</scope>
    <scope>STRUCTURE OF CARBOHYDRATES</scope>
    <source>
        <tissue>Cerebrospinal fluid</tissue>
    </source>
</reference>
<reference key="46">
    <citation type="journal article" date="2013" name="J. Proteome Res.">
        <title>LC-MS/MS characterization of O-glycosylation sites and glycan structures of human cerebrospinal fluid glycoproteins.</title>
        <authorList>
            <person name="Halim A."/>
            <person name="Ruetschi U."/>
            <person name="Larson G."/>
            <person name="Nilsson J."/>
        </authorList>
    </citation>
    <scope>GLYCOSYLATION AT THR-1244</scope>
    <scope>IDENTIFICATION BY MASS SPECTROMETRY</scope>
</reference>
<reference key="47">
    <citation type="journal article" date="2015" name="Cell">
        <title>A single kinase generates the majority of the secreted phosphoproteome.</title>
        <authorList>
            <person name="Tagliabracci V.S."/>
            <person name="Wiley S.E."/>
            <person name="Guo X."/>
            <person name="Kinch L.N."/>
            <person name="Durrant E."/>
            <person name="Wen J."/>
            <person name="Xiao J."/>
            <person name="Cui J."/>
            <person name="Nguyen K.B."/>
            <person name="Engel J.L."/>
            <person name="Coon J.J."/>
            <person name="Grishin N."/>
            <person name="Pinna L.A."/>
            <person name="Pagliarini D.J."/>
            <person name="Dixon J.E."/>
        </authorList>
    </citation>
    <scope>PHOSPHORYLATION AT SER-918</scope>
</reference>
<reference key="48">
    <citation type="journal article" date="2015" name="J. Innate Immun.">
        <title>C4a: An anaphylatoxin in name only.</title>
        <authorList>
            <person name="Barnum S.R."/>
        </authorList>
    </citation>
    <scope>REVIEW (C4A ANAPHYLATOXIN)</scope>
</reference>
<reference key="49">
    <citation type="journal article" date="2016" name="Biochem. J.">
        <title>Domain structure of human complement C4b extends with increasing NaCl concentration: implications for its regulatory mechanism.</title>
        <authorList>
            <person name="Fung K.W."/>
            <person name="Wright D.W."/>
            <person name="Gor J."/>
            <person name="Swann M.J."/>
            <person name="Perkins S.J."/>
        </authorList>
    </citation>
    <scope>FUNCTION (COMPLEMENT C4B-A)</scope>
</reference>
<reference key="50">
    <citation type="journal article" date="2016" name="J. Biol. Chem.">
        <title>Solution Structures of Complement C2 and Its C4 Complexes Propose Pathway-specific mechanisms for control and activation of the complement proconvertases.</title>
        <authorList>
            <person name="Mortensen S."/>
            <person name="Jensen J.K."/>
            <person name="Andersen G.R."/>
        </authorList>
    </citation>
    <scope>SUBUNIT</scope>
</reference>
<reference key="51">
    <citation type="journal article" date="2016" name="Nature">
        <title>Schizophrenia risk from complex variation of complement component 4.</title>
        <authorList>
            <consortium name="Schizophrenia Working Group of the Psychiatric Genomics Consortium"/>
            <person name="Sekar A."/>
            <person name="Bialas A.R."/>
            <person name="de Rivera H."/>
            <person name="Davis A."/>
            <person name="Hammond T.R."/>
            <person name="Kamitaki N."/>
            <person name="Tooley K."/>
            <person name="Presumey J."/>
            <person name="Baum M."/>
            <person name="Van Doren V."/>
            <person name="Genovese G."/>
            <person name="Rose S.A."/>
            <person name="Handsaker R.E."/>
            <person name="Daly M.J."/>
            <person name="Carroll M.C."/>
            <person name="Stevens B."/>
            <person name="McCarroll S.A."/>
        </authorList>
    </citation>
    <scope>POLYMORPHISM</scope>
    <scope>TISSUE SPECIFICITY</scope>
    <scope>SUBCELLULAR LOCATION</scope>
</reference>
<reference key="52">
    <citation type="journal article" date="2019" name="Proc. Natl. Acad. Sci. U.S.A.">
        <title>Insights into IgM-mediated complement activation based on in situ structures of IgM-C1-C4b.</title>
        <authorList>
            <person name="Sharp T.H."/>
            <person name="Boyle A.L."/>
            <person name="Diebolder C.A."/>
            <person name="Kros A."/>
            <person name="Koster A.J."/>
            <person name="Gros P."/>
        </authorList>
    </citation>
    <scope>FUNCTION (COMPLEMENT C4B-A)</scope>
</reference>
<reference key="53">
    <citation type="journal article" date="2025" name="Nature">
        <title>Granzyme K activates the entire complement cascade.</title>
        <authorList>
            <consortium name="Accelerating Medicines Partnership RA/SLE Network"/>
            <person name="Donado C.A."/>
            <person name="Theisen E."/>
            <person name="Zhang F."/>
            <person name="Nathan A."/>
            <person name="Fairfield M.L."/>
            <person name="Rupani K.V."/>
            <person name="Jones D."/>
            <person name="Johannes K.P."/>
            <person name="Raychaudhuri S."/>
            <person name="Dwyer D.F."/>
            <person name="Jonsson A.H."/>
            <person name="Brenner M.B."/>
        </authorList>
    </citation>
    <scope>FUNCTION</scope>
    <scope>PROTEOLYTIC CLEAVAGE</scope>
</reference>
<reference evidence="57" key="54">
    <citation type="journal article" date="2002" name="J. Mol. Biol.">
        <title>X-ray crystal structure of the C4d fragment of human complement component C4.</title>
        <authorList>
            <person name="van den Elsen J.M."/>
            <person name="Martin A."/>
            <person name="Wong V."/>
            <person name="Clemenza L."/>
            <person name="Rose D.R."/>
            <person name="Isenman D.E."/>
        </authorList>
    </citation>
    <scope>X-RAY CRYSTALLOGRAPHY (2.3 ANGSTROMS) OF 957-1323</scope>
</reference>
<reference key="55">
    <citation type="journal article" date="2012" name="Proc. Natl. Acad. Sci. U.S.A.">
        <title>Structural basis for activation of the complement system by component C4 cleavage.</title>
        <authorList>
            <person name="Kidmose R.T."/>
            <person name="Laursen N.S."/>
            <person name="Dobo J."/>
            <person name="Kjaer T.R."/>
            <person name="Sirotkina S."/>
            <person name="Yatime L."/>
            <person name="Sottrup-Jensen L."/>
            <person name="Thiel S."/>
            <person name="Gal P."/>
            <person name="Andersen G.R."/>
        </authorList>
    </citation>
    <scope>X-RAY CRYSTALLOGRAPHY (3.50 ANGSTROMS) OF 20-675; 757-1446 AND 1454-1744 IN COMPLEX WITH MASP2</scope>
    <scope>FUNCTION</scope>
    <scope>SUBUNIT</scope>
    <scope>PROTEOLYTIC CLEAVAGE</scope>
</reference>
<reference key="56">
    <citation type="journal article" date="2015" name="J. Immunol.">
        <title>Structural basis for the function of complement component C4 within the classical and lectin pathways of complement.</title>
        <authorList>
            <person name="Mortensen S."/>
            <person name="Kidmose R.T."/>
            <person name="Petersen S.V."/>
            <person name="Szilagyi A."/>
            <person name="Prohaszka Z."/>
            <person name="Andersen G.R."/>
        </authorList>
    </citation>
    <scope>X-RAY CRYSTALLOGRAPHY (3.50 ANGSTROMS) OF 20-675; 757-1446 AND 1454-1744 IN COMPLEX WITH MASP2</scope>
</reference>
<reference evidence="58 59 60" key="57">
    <citation type="journal article" date="2016" name="Acta Crystallogr. D Struct. Biol.">
        <title>Re-evaluation of low-resolution crystal structures via interactive molecular-dynamics flexible fitting (iMDFF): a case study in complement C4.</title>
        <authorList>
            <person name="Croll T.I."/>
            <person name="Andersen G.R."/>
        </authorList>
    </citation>
    <scope>X-RAY CRYSTALLOGRAPHY (3.50 ANGSTROMS) OF 20-675; 757-1446 AND 1454-1744 IN COMPLEX WITH MASP2</scope>
    <scope>SUBUNIT</scope>
    <scope>GLYCOSYLATION AT ASN-226 AND ASN-862</scope>
</reference>
<reference evidence="61" key="58">
    <citation type="journal article" date="2020" name="J. Immunol.">
        <title>An ultrahigh-affinity complement C4b-specific nanobody inhibits in vivo assembly of the classical pathway proconvertase.</title>
        <authorList>
            <person name="Zarantonello A."/>
            <person name="Presumey J."/>
            <person name="Simoni L."/>
            <person name="Yalcin E."/>
            <person name="Fox R."/>
            <person name="Hansen A."/>
            <person name="Olesen H.G."/>
            <person name="Thiel S."/>
            <person name="Johnson M.B."/>
            <person name="Stevens B."/>
            <person name="Laursen N.S."/>
            <person name="Carroll M.C."/>
            <person name="Andersen G.R."/>
        </authorList>
    </citation>
    <scope>X-RAY CRYSTALLOGRAPHY (3.30 ANGSTROMS) OF 757-1446</scope>
    <scope>FUNCTION (COMPLEMENT C4B-A)</scope>
    <scope>ACTIVITY REGULATION</scope>
    <scope>DISULFIDE BONDS</scope>
</reference>
<reference evidence="62 63 64" key="59">
    <citation type="journal article" date="2022" name="J. Immunol.">
        <title>Multifaceted activities of seven nanobodies against complement C4b.</title>
        <authorList>
            <person name="Becerra K.I."/>
            <person name="Oosterheert W."/>
            <person name="van den Bos R.M."/>
            <person name="Xenaki K.T."/>
            <person name="Lorent J.H."/>
            <person name="Ruyken M."/>
            <person name="Schouten A."/>
            <person name="Rooijakkers S.H.M."/>
            <person name="van Bergen En Henegouwen P.M.P."/>
            <person name="Gros P."/>
        </authorList>
    </citation>
    <scope>STRUCTURE BY ELECTRON MICROSCOPY (3.39 ANGSTROMS) OF 20-675; 680-1446 AND 1454-1744</scope>
    <scope>FUNCTION (COMPLEMENT C4B-A)</scope>
    <scope>ACTIVITY REGULATION</scope>
    <scope>DISULFIDE BONDS</scope>
</reference>
<reference key="60">
    <citation type="journal article" date="1992" name="J. Immunol.">
        <title>The coding sequence of the hemolytically inactive C4A6 allotype of human complement component C4 reveals that a single arginine to tryptophan substitution at beta-chain residue 458 is the likely cause of the defect.</title>
        <authorList>
            <person name="Anderson M.J."/>
            <person name="Milner C.M."/>
            <person name="Cotton G.H."/>
            <person name="Campbell R.D."/>
        </authorList>
    </citation>
    <scope>VARIANT ALA-1286</scope>
</reference>
<accession>P0C0L4</accession>
<accession>A6H8M8</accession>
<accession>A6NHJ5</accession>
<accession>A7E2V2</accession>
<accession>B0QZR6</accession>
<accession>B0V2C8</accession>
<accession>B2RUT6</accession>
<accession>B7ZVZ6</accession>
<accession>P01028</accession>
<accession>P78445</accession>
<accession>Q13160</accession>
<accession>Q13906</accession>
<accession>Q14033</accession>
<accession>Q14835</accession>
<accession>Q4LE82</accession>
<accession>Q5JNX2</accession>
<accession>Q5JQM8</accession>
<accession>Q6P4R1</accession>
<accession>Q6U2E5</accession>
<accession>Q6U2E8</accession>
<accession>Q6U2F0</accession>
<accession>Q6U2F3</accession>
<accession>Q6U2F4</accession>
<accession>Q6U2F6</accession>
<accession>Q6U2F8</accession>
<accession>Q6U2G0</accession>
<accession>Q96EG2</accession>
<accession>Q96SA8</accession>
<accession>Q9NPK5</accession>
<accession>Q9UIP5</accession>
<comment type="function">
    <text evidence="8 16 22 25 31 32 36 47">Precursor of non-enzymatic components of the classical, lectin and GZMK complement pathways, which consist in a cascade of proteins that leads to phagocytosis and breakdown of pathogens and signaling that strengthens the adaptive immune system.</text>
</comment>
<comment type="function">
    <molecule>Complement C4b-A</molecule>
    <text evidence="8 16 24 30 43 47">Non-enzymatic component of C3 and C5 convertases (PubMed:8538770). Generated following cleavage by complement proteases (C1S, MASP2 or GZMK, depending on the complement pathway), it covalently attaches to the surface of pathogens, where it acts as an opsonin that marks the surface of antigens for removal (PubMed:27738201, PubMed:8538770). It then recruits the serine protease complement C2b to form the C3 and C5 convertases, which cleave and activate C3 and C5, respectively, the next components of the complement pathways (PubMed:12878586, PubMed:18204047, PubMed:2387864, PubMed:6906228). Complement C4b-A isotype is responsible for effective binding to form amide bonds with immune aggregates or protein antigens, while complement C4b-B isotype catalyzes the transacylation of the thioester carbonyl group to form ester bonds with carbohydrate antigens (PubMed:8538770).</text>
</comment>
<comment type="function">
    <molecule>C4a anaphylatoxin</molecule>
    <text evidence="39 52">Putative humoral mediator released following cleavage by complement proteases (C1S, MASP2 or GZMK, depending on the complement pathway) (PubMed:6167582). While it is strongly similar to anaphylatoxins, its role is unclear (PubMed:25659340). Was reported to act as a mediator of local inflammatory process; however these effects were probably due to contamination with C3a and/C5a anaphylatoxins in biological assays (PubMed:25659340).</text>
</comment>
<comment type="activity regulation">
    <molecule>Complement C4b-A</molecule>
    <text evidence="31 32">Specifically inhibited by nanobody hC4Nb8, inhibiting the classical complement pathway (PubMed:32769120). Specifically inhibited by NbB5, NbE11 and NbH9 nanobodies, and to a lesser extent by NbH11 and NbE3 nanobodies (PubMed:35428691).</text>
</comment>
<comment type="subunit">
    <text evidence="37">Complement circulates in blood as a disulfide-linked trimer of an alpha, beta and gamma chain.</text>
</comment>
<comment type="subunit">
    <molecule>Complement C4b-A</molecule>
    <text evidence="8 14 16 22 24 28 29 34 43">Complement C4b is composed of complement C4b-A, complement C4 beta and complement C4 gamma chains that are associated via disulfide bonds (PubMed:22949645, PubMed:27599733). Non-enzymatic component of the C3 convertase, also named C4bC2b, composed of the serine protease complement C2b (C2), as well as complement C4b (PubMed:27252379, PubMed:3874204, PubMed:6906228). Non-enzymatic component of the C5 convertase, also named C4bC2bC3b, composed of the serine protease complement C2b (C2), complement C3b, as well as complement C4b (PubMed:12878586, PubMed:1740458, PubMed:18204047, PubMed:2387864).</text>
</comment>
<comment type="interaction">
    <interactant intactId="EBI-1223619">
        <id>P0C0L4</id>
    </interactant>
    <interactant intactId="EBI-13320913">
        <id>A2RUT3</id>
        <label>TMEM89</label>
    </interactant>
    <organismsDiffer>false</organismsDiffer>
    <experiments>2</experiments>
</comment>
<comment type="subcellular location">
    <subcellularLocation>
        <location evidence="39 47">Secreted</location>
    </subcellularLocation>
    <subcellularLocation>
        <location evidence="27">Synapse</location>
    </subcellularLocation>
    <subcellularLocation>
        <location evidence="27">Cell projection</location>
        <location evidence="27">Axon</location>
    </subcellularLocation>
    <subcellularLocation>
        <location evidence="27">Cell projection</location>
        <location evidence="27">Dendrite</location>
    </subcellularLocation>
</comment>
<comment type="subcellular location">
    <molecule>C4a anaphylatoxin</molecule>
    <subcellularLocation>
        <location evidence="39">Secreted</location>
    </subcellularLocation>
</comment>
<comment type="subcellular location">
    <molecule>Complement C4b-A</molecule>
    <subcellularLocation>
        <location evidence="47">Secreted</location>
    </subcellularLocation>
    <subcellularLocation>
        <location evidence="47">Cell surface</location>
    </subcellularLocation>
    <text evidence="47">Covalently associated with the surface of pathogens: the internal thioester bond reacts with carbohydrate antigens on the target surface to form amide or ester bonds.</text>
</comment>
<comment type="alternative products">
    <event type="alternative splicing"/>
    <isoform>
        <id>P0C0L4-1</id>
        <name>1</name>
        <sequence type="displayed"/>
    </isoform>
    <isoform>
        <id>P0C0L4-2</id>
        <name>2</name>
        <sequence type="described" ref="VSP_046252"/>
    </isoform>
</comment>
<comment type="tissue specificity">
    <text evidence="4">Complement component C4 is expressed at highest levels in the liver, at moderate levels in the adrenal cortex, adrenal medulla, thyroid gland, and the kidney, and at lowest levels in the heart, ovary, small intestine, thymus, pancreas and spleen (PubMed:11367523). The extra-hepatic sites of expression may be important for the local protection and inflammatory response (PubMed:11367523).</text>
</comment>
<comment type="PTM">
    <text evidence="5 12 22 33 36 38 40 44 48">Prior to secretion, the single-chain precursor is enzymatically cleaved by plasminogen (PLG) to yield non-identical chains alpha, beta and gamma (PubMed:76991). During activation of the complement systems, the alpha chain is cleaved into C4a and C4b by different proteases depending on the complement pathway: C4b stays linked to the beta and gamma chains, while C4a is released in the plasma (PubMed:11527969, PubMed:16169853, PubMed:22949645, PubMed:467643, PubMed:6319179, PubMed:9422791). The alpha chain is cleaved by C1S to generate C4a and C4b following activation by the classical complement system (PubMed:11527969, PubMed:16169853, PubMed:22949645, PubMed:467643, PubMed:6319179, PubMed:9422791). The alpha chain is cleaved to generate C4a and C4b by MASP2 following activation by the lectin complement system (PubMed:11527969, PubMed:22949645). The alpha chain is cleaved by GZMK to generate C4a and C4b following activation by the GZMK complement system (PubMed:39914456). Further degradation of C4b by C1 into the inactive fragments C4c and C4d blocks the generation of C3 convertase (PubMed:3696167). The proteolytic cleavages often are incomplete so that many structural forms can be found in plasma (PubMed:3696167).</text>
</comment>
<comment type="PTM">
    <molecule>Complement C4b-A</molecule>
    <text evidence="47">Upon activation, the internal thioester bond reacts with carbohydrate antigens on the target surface to form amide or ester bonds, leading to covalent association with the surface of pathogens.</text>
</comment>
<comment type="PTM">
    <molecule>Complement C4b-A</molecule>
    <text evidence="14 24">Ser-1236 of complement C4b interacts with complement C3b via a thioester linkage.</text>
</comment>
<comment type="PTM">
    <text evidence="7 10 13 17 18 19 20 23">N- and O-glycosylated. O-glycosylated with a core 1 or possibly core 8 glycan.</text>
</comment>
<comment type="polymorphism">
    <text evidence="4 27">The complement component C4 is the most polymorphic protein of the complement system. It is the product of 2 closely linked and highly homologous genes, C4A and C4B. Once polymorphic variation is discounted, the 2 isotypes differ by only 4 amino acids at positions 1120-1125: PCPVLD for C4A and LSPVIH for C4B. The 2 isotypes bear several antigenic determinants defining Chido/Rodgers blood group system [MIM:614374]. Rodgers determinants are generally associated with C4A allotypes, and Chido with C4B. Variations at these loci involve not only nucleotide polymorphisms, but also gene number and gene size. Some individuals may lack either C4A, or C4B gene. Partial deficiency of C4A or C4B is the most commonly inherited immune deficiency known in humans with a combined frequency over 31% in the normal Caucasian population (PubMed:11367523). C4A6 allotype is deficient in hemolytic activity. Allotype C4A13 is infrequent. Common copy-number variants of C4A and C4B affecting expression of complement component C4 in the brain have been associated with schizophrenia risk (PubMed:26814963).</text>
</comment>
<comment type="disease" evidence="46">
    <disease id="DI-01308">
        <name>Complement component 4A deficiency</name>
        <acronym>C4AD</acronym>
        <description>A rare defect of the complement classical pathway associated with the development of autoimmune disorders, mainly systemic lupus with or without associated glomerulonephritis.</description>
        <dbReference type="MIM" id="614380"/>
    </disease>
    <text>The disease is caused by variants affecting the gene represented in this entry.</text>
</comment>
<comment type="disease" evidence="3 15">
    <disease id="DI-02648">
        <name>Systemic lupus erythematosus</name>
        <acronym>SLE</acronym>
        <description>A chronic, relapsing, inflammatory, and often febrile multisystemic disorder of connective tissue, characterized principally by involvement of the skin, joints, kidneys and serosal membranes. It is of unknown etiology, but is thought to represent a failure of the regulatory mechanisms of the autoimmune system. The disease is marked by a wide range of system dysfunctions, an elevated erythrocyte sedimentation rate, and the formation of LE cells in the blood or bone marrow.</description>
        <dbReference type="MIM" id="152700"/>
    </disease>
    <text>Disease susceptibility is associated with variants affecting the gene represented in this entry. Interindividual copy-number variation (CNV) of complement component C4 and associated polymorphisms result in different susceptibilities to SLE. The risk of SLE susceptibility has been shown to be significantly increased among subjects with only two copies of total C4. A high copy number is a protective factor against SLE.</text>
</comment>
<comment type="sequence caution" evidence="55">
    <conflict type="miscellaneous discrepancy">
        <sequence resource="EMBL-CDS" id="AAB59537"/>
    </conflict>
    <text>During cDNA synthesis, the 5' end has been inverted (PubMed:3838531).</text>
</comment>
<comment type="sequence caution" evidence="54">
    <conflict type="erroneous initiation">
        <sequence resource="EMBL-CDS" id="BAE06071"/>
    </conflict>
    <text>Extended N-terminus.</text>
</comment>